<protein>
    <recommendedName>
        <fullName evidence="84">Apolipoprotein E</fullName>
        <shortName>Apo-E</shortName>
    </recommendedName>
</protein>
<keyword id="KW-0002">3D-structure</keyword>
<keyword id="KW-0026">Alzheimer disease</keyword>
<keyword id="KW-1008">Amyloidosis</keyword>
<keyword id="KW-0153">Cholesterol metabolism</keyword>
<keyword id="KW-0162">Chylomicron</keyword>
<keyword id="KW-0903">Direct protein sequencing</keyword>
<keyword id="KW-0225">Disease variant</keyword>
<keyword id="KW-0967">Endosome</keyword>
<keyword id="KW-0272">Extracellular matrix</keyword>
<keyword id="KW-0971">Glycation</keyword>
<keyword id="KW-0325">Glycoprotein</keyword>
<keyword id="KW-0345">HDL</keyword>
<keyword id="KW-0358">Heparin-binding</keyword>
<keyword id="KW-0945">Host-virus interaction</keyword>
<keyword id="KW-0380">Hyperlipidemia</keyword>
<keyword id="KW-0443">Lipid metabolism</keyword>
<keyword id="KW-0445">Lipid transport</keyword>
<keyword id="KW-0446">Lipid-binding</keyword>
<keyword id="KW-0523">Neurodegeneration</keyword>
<keyword id="KW-0558">Oxidation</keyword>
<keyword id="KW-0597">Phosphoprotein</keyword>
<keyword id="KW-1267">Proteomics identification</keyword>
<keyword id="KW-1185">Reference proteome</keyword>
<keyword id="KW-0677">Repeat</keyword>
<keyword id="KW-0964">Secreted</keyword>
<keyword id="KW-0732">Signal</keyword>
<keyword id="KW-0753">Steroid metabolism</keyword>
<keyword id="KW-1207">Sterol metabolism</keyword>
<keyword id="KW-0813">Transport</keyword>
<keyword id="KW-0850">VLDL</keyword>
<proteinExistence type="evidence at protein level"/>
<sequence length="317" mass="36154">MKVLWAALLVTFLAGCQAKVEQAVETEPEPELRQQTEWQSGQRWELALGRFWDYLRWVQTLSEQVQEELLSSQVTQELRALMDETMKELKAYKSELEEQLTPVAEETRARLSKELQAAQARLGADMEDVCGRLVQYRGEVQAMLGQSTEELRVRLASHLRKLRKRLLRDADDLQKRLAVYQAGAREGAERGLSAIRERLGPLVEQGRVRAATVGSLAGQPLQERAQAWGERLRARMEEMGSRTRDRLDEVKEQVAEVRAKLEEQAQQIRLQAEAFQARLKSWFEPLVEDMQRQWAGLVEKVQAAVGTSAAPVPSDNH</sequence>
<name>APOE_HUMAN</name>
<evidence type="ECO:0000250" key="1">
    <source>
        <dbReference type="UniProtKB" id="P08226"/>
    </source>
</evidence>
<evidence type="ECO:0000269" key="2">
    <source>
    </source>
</evidence>
<evidence type="ECO:0000269" key="3">
    <source>
    </source>
</evidence>
<evidence type="ECO:0000269" key="4">
    <source>
    </source>
</evidence>
<evidence type="ECO:0000269" key="5">
    <source>
    </source>
</evidence>
<evidence type="ECO:0000269" key="6">
    <source>
    </source>
</evidence>
<evidence type="ECO:0000269" key="7">
    <source>
    </source>
</evidence>
<evidence type="ECO:0000269" key="8">
    <source>
    </source>
</evidence>
<evidence type="ECO:0000269" key="9">
    <source>
    </source>
</evidence>
<evidence type="ECO:0000269" key="10">
    <source>
    </source>
</evidence>
<evidence type="ECO:0000269" key="11">
    <source>
    </source>
</evidence>
<evidence type="ECO:0000269" key="12">
    <source>
    </source>
</evidence>
<evidence type="ECO:0000269" key="13">
    <source>
    </source>
</evidence>
<evidence type="ECO:0000269" key="14">
    <source>
    </source>
</evidence>
<evidence type="ECO:0000269" key="15">
    <source>
    </source>
</evidence>
<evidence type="ECO:0000269" key="16">
    <source>
    </source>
</evidence>
<evidence type="ECO:0000269" key="17">
    <source>
    </source>
</evidence>
<evidence type="ECO:0000269" key="18">
    <source>
    </source>
</evidence>
<evidence type="ECO:0000269" key="19">
    <source>
    </source>
</evidence>
<evidence type="ECO:0000269" key="20">
    <source>
    </source>
</evidence>
<evidence type="ECO:0000269" key="21">
    <source>
    </source>
</evidence>
<evidence type="ECO:0000269" key="22">
    <source>
    </source>
</evidence>
<evidence type="ECO:0000269" key="23">
    <source>
    </source>
</evidence>
<evidence type="ECO:0000269" key="24">
    <source>
    </source>
</evidence>
<evidence type="ECO:0000269" key="25">
    <source>
    </source>
</evidence>
<evidence type="ECO:0000269" key="26">
    <source>
    </source>
</evidence>
<evidence type="ECO:0000269" key="27">
    <source>
    </source>
</evidence>
<evidence type="ECO:0000269" key="28">
    <source>
    </source>
</evidence>
<evidence type="ECO:0000269" key="29">
    <source>
    </source>
</evidence>
<evidence type="ECO:0000269" key="30">
    <source>
    </source>
</evidence>
<evidence type="ECO:0000269" key="31">
    <source>
    </source>
</evidence>
<evidence type="ECO:0000269" key="32">
    <source>
    </source>
</evidence>
<evidence type="ECO:0000269" key="33">
    <source>
    </source>
</evidence>
<evidence type="ECO:0000269" key="34">
    <source>
    </source>
</evidence>
<evidence type="ECO:0000269" key="35">
    <source>
    </source>
</evidence>
<evidence type="ECO:0000269" key="36">
    <source>
    </source>
</evidence>
<evidence type="ECO:0000269" key="37">
    <source>
    </source>
</evidence>
<evidence type="ECO:0000269" key="38">
    <source>
    </source>
</evidence>
<evidence type="ECO:0000269" key="39">
    <source>
    </source>
</evidence>
<evidence type="ECO:0000269" key="40">
    <source>
    </source>
</evidence>
<evidence type="ECO:0000269" key="41">
    <source>
    </source>
</evidence>
<evidence type="ECO:0000269" key="42">
    <source>
    </source>
</evidence>
<evidence type="ECO:0000269" key="43">
    <source>
    </source>
</evidence>
<evidence type="ECO:0000269" key="44">
    <source>
    </source>
</evidence>
<evidence type="ECO:0000269" key="45">
    <source>
    </source>
</evidence>
<evidence type="ECO:0000269" key="46">
    <source>
    </source>
</evidence>
<evidence type="ECO:0000269" key="47">
    <source>
    </source>
</evidence>
<evidence type="ECO:0000269" key="48">
    <source>
    </source>
</evidence>
<evidence type="ECO:0000269" key="49">
    <source>
    </source>
</evidence>
<evidence type="ECO:0000269" key="50">
    <source>
    </source>
</evidence>
<evidence type="ECO:0000269" key="51">
    <source>
    </source>
</evidence>
<evidence type="ECO:0000269" key="52">
    <source>
    </source>
</evidence>
<evidence type="ECO:0000269" key="53">
    <source>
    </source>
</evidence>
<evidence type="ECO:0000269" key="54">
    <source>
    </source>
</evidence>
<evidence type="ECO:0000269" key="55">
    <source>
    </source>
</evidence>
<evidence type="ECO:0000269" key="56">
    <source>
    </source>
</evidence>
<evidence type="ECO:0000269" key="57">
    <source>
    </source>
</evidence>
<evidence type="ECO:0000269" key="58">
    <source>
    </source>
</evidence>
<evidence type="ECO:0000269" key="59">
    <source>
    </source>
</evidence>
<evidence type="ECO:0000269" key="60">
    <source>
    </source>
</evidence>
<evidence type="ECO:0000269" key="61">
    <source>
    </source>
</evidence>
<evidence type="ECO:0000269" key="62">
    <source>
    </source>
</evidence>
<evidence type="ECO:0000269" key="63">
    <source>
    </source>
</evidence>
<evidence type="ECO:0000269" key="64">
    <source>
    </source>
</evidence>
<evidence type="ECO:0000269" key="65">
    <source>
    </source>
</evidence>
<evidence type="ECO:0000269" key="66">
    <source>
    </source>
</evidence>
<evidence type="ECO:0000269" key="67">
    <source>
    </source>
</evidence>
<evidence type="ECO:0000269" key="68">
    <source>
    </source>
</evidence>
<evidence type="ECO:0000269" key="69">
    <source>
    </source>
</evidence>
<evidence type="ECO:0000269" key="70">
    <source>
    </source>
</evidence>
<evidence type="ECO:0000269" key="71">
    <source>
    </source>
</evidence>
<evidence type="ECO:0000269" key="72">
    <source>
    </source>
</evidence>
<evidence type="ECO:0000269" key="73">
    <source>
    </source>
</evidence>
<evidence type="ECO:0000269" key="74">
    <source>
    </source>
</evidence>
<evidence type="ECO:0000269" key="75">
    <source>
    </source>
</evidence>
<evidence type="ECO:0000269" key="76">
    <source>
    </source>
</evidence>
<evidence type="ECO:0000269" key="77">
    <source>
    </source>
</evidence>
<evidence type="ECO:0000269" key="78">
    <source>
    </source>
</evidence>
<evidence type="ECO:0000269" key="79">
    <source>
    </source>
</evidence>
<evidence type="ECO:0000269" key="80">
    <source ref="10"/>
</evidence>
<evidence type="ECO:0000303" key="81">
    <source>
    </source>
</evidence>
<evidence type="ECO:0000303" key="82">
    <source>
    </source>
</evidence>
<evidence type="ECO:0000303" key="83">
    <source>
    </source>
</evidence>
<evidence type="ECO:0000305" key="84"/>
<evidence type="ECO:0000312" key="85">
    <source>
        <dbReference type="HGNC" id="HGNC:613"/>
    </source>
</evidence>
<evidence type="ECO:0007744" key="86">
    <source>
        <dbReference type="PDB" id="1B68"/>
    </source>
</evidence>
<evidence type="ECO:0007744" key="87">
    <source>
        <dbReference type="PDB" id="1BZ4"/>
    </source>
</evidence>
<evidence type="ECO:0007744" key="88">
    <source>
        <dbReference type="PDB" id="1LE2"/>
    </source>
</evidence>
<evidence type="ECO:0007744" key="89">
    <source>
        <dbReference type="PDB" id="1LE4"/>
    </source>
</evidence>
<evidence type="ECO:0007744" key="90">
    <source>
        <dbReference type="PDB" id="1LPE"/>
    </source>
</evidence>
<evidence type="ECO:0007744" key="91">
    <source>
        <dbReference type="PDB" id="1NFN"/>
    </source>
</evidence>
<evidence type="ECO:0007744" key="92">
    <source>
        <dbReference type="PDB" id="1NFO"/>
    </source>
</evidence>
<evidence type="ECO:0007744" key="93">
    <source>
        <dbReference type="PDB" id="1OR2"/>
    </source>
</evidence>
<evidence type="ECO:0007744" key="94">
    <source>
        <dbReference type="PDB" id="1OR3"/>
    </source>
</evidence>
<evidence type="ECO:0007744" key="95">
    <source>
        <dbReference type="PDB" id="2KNY"/>
    </source>
</evidence>
<evidence type="ECO:0007744" key="96">
    <source>
    </source>
</evidence>
<evidence type="ECO:0007829" key="97">
    <source>
        <dbReference type="PDB" id="1OEF"/>
    </source>
</evidence>
<evidence type="ECO:0007829" key="98">
    <source>
        <dbReference type="PDB" id="2KC3"/>
    </source>
</evidence>
<evidence type="ECO:0007829" key="99">
    <source>
        <dbReference type="PDB" id="2L7B"/>
    </source>
</evidence>
<evidence type="ECO:0007829" key="100">
    <source>
        <dbReference type="PDB" id="7FCR"/>
    </source>
</evidence>
<evidence type="ECO:0007829" key="101">
    <source>
        <dbReference type="PDB" id="7UVJ"/>
    </source>
</evidence>
<gene>
    <name evidence="85" type="primary">APOE</name>
</gene>
<feature type="signal peptide" evidence="59">
    <location>
        <begin position="1"/>
        <end position="18"/>
    </location>
</feature>
<feature type="chain" id="PRO_0000001987" description="Apolipoprotein E">
    <location>
        <begin position="19"/>
        <end position="317"/>
    </location>
</feature>
<feature type="repeat" description="1">
    <location>
        <begin position="80"/>
        <end position="101"/>
    </location>
</feature>
<feature type="repeat" description="2">
    <location>
        <begin position="102"/>
        <end position="123"/>
    </location>
</feature>
<feature type="repeat" description="3">
    <location>
        <begin position="124"/>
        <end position="145"/>
    </location>
</feature>
<feature type="repeat" description="4">
    <location>
        <begin position="146"/>
        <end position="167"/>
    </location>
</feature>
<feature type="repeat" description="5">
    <location>
        <begin position="168"/>
        <end position="189"/>
    </location>
</feature>
<feature type="repeat" description="6">
    <location>
        <begin position="190"/>
        <end position="211"/>
    </location>
</feature>
<feature type="repeat" description="7">
    <location>
        <begin position="212"/>
        <end position="233"/>
    </location>
</feature>
<feature type="repeat" description="8">
    <location>
        <begin position="234"/>
        <end position="255"/>
    </location>
</feature>
<feature type="region of interest" description="8 X 22 AA approximate tandem repeats">
    <location>
        <begin position="80"/>
        <end position="255"/>
    </location>
</feature>
<feature type="region of interest" description="LDL and other lipoprotein receptors binding" evidence="23 26">
    <location>
        <begin position="158"/>
        <end position="168"/>
    </location>
</feature>
<feature type="region of interest" description="Lipid-binding and lipoprotein association" evidence="30 65">
    <location>
        <begin position="210"/>
        <end position="290"/>
    </location>
</feature>
<feature type="region of interest" description="Homooligomerization" evidence="68">
    <location>
        <begin position="266"/>
        <end position="317"/>
    </location>
</feature>
<feature type="region of interest" description="Specificity for association with VLDL" evidence="65">
    <location>
        <begin position="278"/>
        <end position="290"/>
    </location>
</feature>
<feature type="binding site" evidence="55">
    <location>
        <begin position="162"/>
        <end position="165"/>
    </location>
    <ligand>
        <name>heparin</name>
        <dbReference type="ChEBI" id="CHEBI:28304"/>
    </ligand>
</feature>
<feature type="binding site" evidence="55">
    <location>
        <begin position="229"/>
        <end position="236"/>
    </location>
    <ligand>
        <name>heparin</name>
        <dbReference type="ChEBI" id="CHEBI:28304"/>
    </ligand>
</feature>
<feature type="modified residue" description="Methionine sulfoxide" evidence="1">
    <location>
        <position position="143"/>
    </location>
</feature>
<feature type="modified residue" description="Phosphoserine; by FAM20C" evidence="40 96">
    <location>
        <position position="147"/>
    </location>
</feature>
<feature type="glycosylation site" description="O-linked (GalNAc...) threonine" evidence="32">
    <location>
        <position position="26"/>
    </location>
</feature>
<feature type="glycosylation site" description="O-linked (GalNAc...) threonine" evidence="32">
    <location>
        <position position="36"/>
    </location>
</feature>
<feature type="glycosylation site" description="N-linked (Glc) (glycation) lysine" evidence="4">
    <location>
        <position position="93"/>
    </location>
</feature>
<feature type="glycosylation site" description="O-linked (GalNAc...) threonine" evidence="22 37">
    <location>
        <position position="212"/>
    </location>
</feature>
<feature type="glycosylation site" description="O-linked (GalNAc...) threonine" evidence="22">
    <location>
        <position position="307"/>
    </location>
</feature>
<feature type="glycosylation site" description="O-linked (GalNAc...) serine" evidence="22 25">
    <location>
        <position position="308"/>
    </location>
</feature>
<feature type="glycosylation site" description="O-linked (GalNAc...) serine" evidence="32">
    <location>
        <position position="314"/>
    </location>
</feature>
<feature type="sequence variant" id="VAR_000645" description="In ApoE5; associated with hyperlipoproteinemia and atherosclerosis; increased binding to LDL receptor; dbSNP:rs121918392." evidence="15 44">
    <original>E</original>
    <variation>K</variation>
    <location>
        <position position="21"/>
    </location>
</feature>
<feature type="sequence variant" id="VAR_000646" description="In HLPP3; ApoE4 Philadelphia, ApoE5 French-Canadian and ApoE5-type; only ApoE4 Philadelphia is associated with HLPP3; dbSNP:rs201672011." evidence="17 18 83">
    <original>E</original>
    <variation>K</variation>
    <location>
        <position position="31"/>
    </location>
</feature>
<feature type="sequence variant" id="VAR_042734" description="In LPG; ApoE2 Kyoto; dbSNP:rs121918399." evidence="3 19">
    <original>R</original>
    <variation>C</variation>
    <location>
        <position position="43"/>
    </location>
</feature>
<feature type="sequence variant" id="VAR_000647" description="Found in a patient with hypercholesterolemia; uncertain significance; ApoE4 Freiburg; dbSNP:rs769452." evidence="6 42">
    <original>L</original>
    <variation>P</variation>
    <location>
        <position position="46"/>
    </location>
</feature>
<feature type="sequence variant" id="VAR_000648" description="In ApoE3 Freiburg; dbSNP:rs28931576.">
    <original>T</original>
    <variation>A</variation>
    <location>
        <position position="60"/>
    </location>
</feature>
<feature type="sequence variant" id="VAR_014114" description="Confirmed at protein level; dbSNP:rs370594287." evidence="28 80">
    <original>Q</original>
    <variation>H</variation>
    <location>
        <position position="64"/>
    </location>
</feature>
<feature type="sequence variant" id="VAR_000649" description="In ApoE5 Frankfurt; dbSNP:rs1180612218." evidence="66">
    <original>Q</original>
    <variation>K</variation>
    <location>
        <position position="99"/>
    </location>
</feature>
<feature type="sequence variant" id="VAR_000650" description="In ApoE5-type; no hyperlipidemia; dbSNP:rs11083750." evidence="83">
    <original>P</original>
    <variation>R</variation>
    <location>
        <position position="102"/>
    </location>
</feature>
<feature type="sequence variant" id="VAR_000651" description="In ApoE3*; dbSNP:rs28931577." evidence="57">
    <original>A</original>
    <variation>T</variation>
    <location>
        <position position="117"/>
    </location>
</feature>
<feature type="sequence variant" id="VAR_016789" description="In ApoE3 Basel; dbSNP:rs937063425." evidence="10">
    <original>A</original>
    <variation>V</variation>
    <location>
        <position position="124"/>
    </location>
</feature>
<feature type="sequence variant" id="VAR_000652" description="In HLPP3 and AD2; ApoE4, ApoE3 Leiden, ApoE3**, ApoE5-Frankfurt and ApoE5-type; ApoE3 Leiden and ApoE3** are associated with HLPP3; ApoE4 is associated with AD2; changed protein structure; no effect on binding to LDL receptor; decreased association with HDL and enrichment in VLDL and IDL; may prevent the interaction with MAP2 and MAPT; changed interaction with APP/A4 amyloid-beta peptide; increased ability to induce APP transcription; increased C-terminal proteolytic processing in neurons; decreased function in neurite outgrowth; ApoE4 is associated with higher susceptibility to SARS-CoV-2 infection in neurons and astrocytes; dbSNP:rs429358." evidence="5 6 9 12 30 39 46 49 62 63 65 66 67 69 70 75 77 83">
    <original>C</original>
    <variation>R</variation>
    <location>
        <position position="130"/>
    </location>
</feature>
<feature type="sequence variant" id="VAR_000653" description="Found in a patient with hypercholesterolemia; uncertain significance; ApoE1 Weisgraber; dbSNP:rs267606664." evidence="42 67">
    <original>G</original>
    <variation>D</variation>
    <location>
        <position position="145"/>
    </location>
</feature>
<feature type="sequence variant" id="VAR_000654" description="In HLPP3; ApoE3 Leiden; no effect on glycosylation." evidence="39 71">
    <original>G</original>
    <variation>GEVQAMLG</variation>
    <location>
        <position position="145"/>
    </location>
</feature>
<feature type="sequence variant" id="VAR_000655" description="In ApoE2-type; no hyperlipidemia; dbSNP:rs28931578." evidence="83">
    <original>R</original>
    <variation>Q</variation>
    <location>
        <position position="152"/>
    </location>
</feature>
<feature type="sequence variant" id="VAR_000657" description="In HLPP3; ApoE2-type; dbSNP:rs121918393." evidence="83">
    <original>R</original>
    <variation>C</variation>
    <location>
        <position position="154"/>
    </location>
</feature>
<feature type="sequence variant" id="VAR_000656" description="In HLPP3; ApoE2 Christchurch; decreased binding to LDL receptor; dbSNP:rs121918393." evidence="29 47 67">
    <original>R</original>
    <variation>S</variation>
    <location>
        <position position="154"/>
    </location>
</feature>
<feature type="sequence variant" id="VAR_000658" description="In HLPP3; ApoE3**; dbSNP:rs387906567." evidence="67">
    <original>R</original>
    <variation>C</variation>
    <location>
        <position position="160"/>
    </location>
</feature>
<feature type="sequence variant" id="VAR_000659" description="In HLPP3; also found in a patient with hypercholesterolemia; ApoE4 Philadelphia and ApoE2-type; dbSNP:rs769455." evidence="6 17 42">
    <original>R</original>
    <variation>C</variation>
    <location>
        <position position="163"/>
    </location>
</feature>
<feature type="sequence variant" id="VAR_000660" description="In HLPP3; uncertain significance; ApoE Kochi; dbSNP:rs121918397." evidence="27">
    <original>R</original>
    <variation>H</variation>
    <location>
        <position position="163"/>
    </location>
</feature>
<feature type="sequence variant" id="VAR_042735" description="In LPG; ApoE2 Sendai; decreased binding to LDL receptor; induces intraglomerular deposition of ApoE-containing lipoproteins; dbSNP:rs121918397." evidence="5 76">
    <original>R</original>
    <variation>P</variation>
    <location>
        <position position="163"/>
    </location>
</feature>
<feature type="sequence variant" id="VAR_000662" description="In HLPP3; ApoE1 Harrisburg; decreased binding to LDL receptor; probable dominant negative effect; decreased in vitro binding to heparin; dbSNP:rs121918394." evidence="60">
    <original>K</original>
    <variation>E</variation>
    <location>
        <position position="164"/>
    </location>
</feature>
<feature type="sequence variant" id="VAR_000661" description="In HLPP3; ApoE2**; dbSNP:rs121918394.">
    <original>K</original>
    <variation>Q</variation>
    <location>
        <position position="164"/>
    </location>
</feature>
<feature type="sequence variant" id="VAR_035015" description="In SBHD; also found in patients with a diagnosis of familial combined hyperlipidemia." evidence="7 16 29 31 36 42">
    <location>
        <position position="167"/>
    </location>
</feature>
<feature type="sequence variant" id="VAR_000663" description="In ApoE3*; decreased binding to LDL receptor; dbSNP:rs267606662." evidence="47 57">
    <original>A</original>
    <variation>P</variation>
    <location>
        <position position="170"/>
    </location>
</feature>
<feature type="sequence variant" id="VAR_000664" description="In HLPP3; ApoE2, ApoE2 Fukuoka, ApoE1 Weisgraber and ApoE3**; ApoE3** is associated with HLPP3; changed protein structure; decreased binding to LDLR and other lipoprotein receptors; decreased in vitro binding to heparin; no effect on distribution among plasma lipoproteins; dbSNP:rs7412." evidence="6 11 12 30 53 60 64 67 74">
    <original>R</original>
    <variation>C</variation>
    <location>
        <position position="176"/>
    </location>
</feature>
<feature type="sequence variant" id="VAR_081136" description="In HLPP3; ApoE3 Washington." evidence="13">
    <location>
        <begin position="228"/>
        <end position="317"/>
    </location>
</feature>
<feature type="sequence variant" id="VAR_000665" description="In ApoE2 Fukuoka; dbSNP:rs267606663." evidence="73">
    <original>R</original>
    <variation>Q</variation>
    <location>
        <position position="242"/>
    </location>
</feature>
<feature type="sequence variant" id="VAR_000666" description="In ApoE2 Dunedin; dbSNP:rs121918395." evidence="33">
    <original>R</original>
    <variation>C</variation>
    <location>
        <position position="246"/>
    </location>
</feature>
<feature type="sequence variant" id="VAR_000667" description="In ApoE2 WG; dbSNP:rs199768005." evidence="72">
    <original>V</original>
    <variation>E</variation>
    <location>
        <position position="254"/>
    </location>
</feature>
<feature type="sequence variant" id="VAR_000668" description="In HLPP3; ApoE7 Suita." evidence="43">
    <original>EE</original>
    <variation>KK</variation>
    <location>
        <begin position="262"/>
        <end position="263"/>
    </location>
</feature>
<feature type="sequence variant" id="VAR_000669" description="In ApoE3 HB; dbSNP:rs267606661." evidence="72 77">
    <original>R</original>
    <variation>G</variation>
    <location>
        <position position="269"/>
    </location>
</feature>
<feature type="sequence variant" id="VAR_000670" description="In ApoE1 HE; requires 2 nucleotide substitutions." evidence="72">
    <original>L</original>
    <variation>E</variation>
    <location>
        <position position="270"/>
    </location>
</feature>
<feature type="sequence variant" id="VAR_000671" description="In ApoE4 PD; dbSNP:rs121918398." evidence="72">
    <original>R</original>
    <variation>H</variation>
    <location>
        <position position="292"/>
    </location>
</feature>
<feature type="sequence variant" id="VAR_000672" description="In ApoE4 HG; dbSNP:rs28931579." evidence="72">
    <original>S</original>
    <variation>R</variation>
    <location>
        <position position="314"/>
    </location>
</feature>
<feature type="mutagenesis site" description="Changes the plasma lipoprotein distribution of ApoE4 to the HDL." evidence="65">
    <original>R</original>
    <variation>T</variation>
    <location>
        <position position="79"/>
    </location>
</feature>
<feature type="mutagenesis site" description="No effect on plasma lipoprotein distribution." evidence="65">
    <original>E</original>
    <variation>A</variation>
    <location>
        <position position="127"/>
    </location>
</feature>
<feature type="mutagenesis site" description="Increased binding to LDL receptor; when associated with A-167." evidence="47">
    <original>S</original>
    <variation>R</variation>
    <location>
        <position position="157"/>
    </location>
</feature>
<feature type="mutagenesis site" description="Decreased binding to LDL receptor." evidence="47">
    <original>H</original>
    <variation>A</variation>
    <location>
        <position position="158"/>
    </location>
</feature>
<feature type="mutagenesis site" description="Decreased binding to LDL receptor." evidence="47">
    <original>K</original>
    <variation>A</variation>
    <location>
        <position position="161"/>
    </location>
</feature>
<feature type="mutagenesis site" description="Decreased binding to LDL receptor." evidence="47">
    <original>L</original>
    <variation>P</variation>
    <location>
        <position position="162"/>
    </location>
</feature>
<feature type="mutagenesis site" description="Increased binding to LDL receptor; when associated with R-157." evidence="47">
    <original>L</original>
    <variation>A</variation>
    <location>
        <position position="167"/>
    </location>
</feature>
<feature type="mutagenesis site" description="Decreased binding to LDL receptor." evidence="47">
    <original>R</original>
    <variation>A</variation>
    <location>
        <position position="168"/>
    </location>
</feature>
<feature type="mutagenesis site" description="Restores the LDL receptor binding activity of ApoE2." evidence="74">
    <original>D</original>
    <variation>A</variation>
    <location>
        <position position="172"/>
    </location>
</feature>
<feature type="mutagenesis site" description="Loss of O-glycosylation." evidence="37">
    <original>T</original>
    <variation>A</variation>
    <location>
        <position position="212"/>
    </location>
</feature>
<feature type="strand" evidence="98">
    <location>
        <begin position="22"/>
        <end position="24"/>
    </location>
</feature>
<feature type="helix" evidence="98">
    <location>
        <begin position="31"/>
        <end position="39"/>
    </location>
</feature>
<feature type="turn" evidence="98">
    <location>
        <begin position="40"/>
        <end position="42"/>
    </location>
</feature>
<feature type="helix" evidence="100">
    <location>
        <begin position="43"/>
        <end position="60"/>
    </location>
</feature>
<feature type="helix" evidence="100">
    <location>
        <begin position="63"/>
        <end position="70"/>
    </location>
</feature>
<feature type="helix" evidence="100">
    <location>
        <begin position="73"/>
        <end position="96"/>
    </location>
</feature>
<feature type="helix" evidence="100">
    <location>
        <begin position="97"/>
        <end position="99"/>
    </location>
</feature>
<feature type="strand" evidence="101">
    <location>
        <begin position="103"/>
        <end position="105"/>
    </location>
</feature>
<feature type="helix" evidence="100">
    <location>
        <begin position="107"/>
        <end position="142"/>
    </location>
</feature>
<feature type="turn" evidence="100">
    <location>
        <begin position="143"/>
        <end position="145"/>
    </location>
</feature>
<feature type="helix" evidence="100">
    <location>
        <begin position="149"/>
        <end position="180"/>
    </location>
</feature>
<feature type="turn" evidence="98">
    <location>
        <begin position="187"/>
        <end position="190"/>
    </location>
</feature>
<feature type="helix" evidence="98">
    <location>
        <begin position="193"/>
        <end position="198"/>
    </location>
</feature>
<feature type="strand" evidence="99">
    <location>
        <begin position="200"/>
        <end position="202"/>
    </location>
</feature>
<feature type="helix" evidence="99">
    <location>
        <begin position="209"/>
        <end position="217"/>
    </location>
</feature>
<feature type="helix" evidence="99">
    <location>
        <begin position="228"/>
        <end position="241"/>
    </location>
</feature>
<feature type="helix" evidence="99">
    <location>
        <begin position="257"/>
        <end position="283"/>
    </location>
</feature>
<feature type="helix" evidence="97">
    <location>
        <begin position="286"/>
        <end position="303"/>
    </location>
</feature>
<feature type="strand" evidence="99">
    <location>
        <begin position="307"/>
        <end position="309"/>
    </location>
</feature>
<accession>P02649</accession>
<accession>B2RC15</accession>
<accession>C0JYY5</accession>
<accession>Q9P2S4</accession>
<comment type="function">
    <text evidence="1 11 14 15 20 21 23 24 26 34 35 45 46 50 58 60 61 74 75 78 79 81 82">APOE is an apolipoprotein, a protein associating with lipid particles, that mainly functions in lipoprotein-mediated lipid transport between organs via the plasma and interstitial fluids (PubMed:14754908, PubMed:1911868, PubMed:6860692). APOE is a core component of plasma lipoproteins and is involved in their production, conversion and clearance (PubMed:14754908, PubMed:1911868, PubMed:1917954, PubMed:23620513, PubMed:2762297, PubMed:6860692, PubMed:9395455). Apolipoproteins are amphipathic molecules that interact both with lipids of the lipoprotein particle core and the aqueous environment of the plasma (PubMed:2762297, PubMed:6860692, PubMed:9395455). As such, APOE associates with chylomicrons, chylomicron remnants, very low density lipoproteins (VLDL) and intermediate density lipoproteins (IDL) but shows a preferential binding to high-density lipoproteins (HDL) (PubMed:1911868, PubMed:6860692). It also binds a wide range of cellular receptors including the LDL receptor/LDLR, the LDL receptor-related proteins LRP1, LRP2 and LRP8 and the very low-density lipoprotein receptor/VLDLR that mediate the cellular uptake of the APOE-containing lipoprotein particles (PubMed:12950167, PubMed:1530612, PubMed:1917954, PubMed:20030366, PubMed:20303980, PubMed:2063194, PubMed:2762297, PubMed:7635945, PubMed:7768901, PubMed:8756331, PubMed:8939961). Finally, APOE also has a heparin-binding activity and binds heparan-sulfate proteoglycans on the surface of cells, a property that supports the capture and the receptor-mediated uptake of APOE-containing lipoproteins by cells (PubMed:23676495, PubMed:7635945, PubMed:9395455, PubMed:9488694). A main function of APOE is to mediate lipoprotein clearance through the uptake of chylomicrons, VLDLs, and HDLs by hepatocytes (PubMed:1911868, PubMed:1917954, PubMed:23676495, PubMed:29516132, PubMed:9395455). APOE is also involved in the biosynthesis by the liver of VLDLs as well as their uptake by peripheral tissues ensuring the delivery of triglycerides and energy storage in muscle, heart and adipose tissues (PubMed:2762297, PubMed:29516132). By participating in the lipoprotein-mediated distribution of lipids among tissues, APOE plays a critical role in plasma and tissues lipid homeostasis (PubMed:1917954, PubMed:2762297, PubMed:29516132). APOE is also involved in two steps of reverse cholesterol transport, the HDLs-mediated transport of cholesterol from peripheral tissues to the liver, and thereby plays an important role in cholesterol homeostasis (PubMed:14754908, PubMed:23620513, PubMed:9395455). First, it is functionally associated with ABCA1 in the biogenesis of HDLs in tissues (PubMed:14754908, PubMed:23620513). Second, it is enriched in circulating HDLs and mediates their uptake by hepatocytes (PubMed:9395455). APOE also plays an important role in lipid transport in the central nervous system, regulating neuron survival and sprouting (PubMed:25173806, PubMed:8939961). APOE is also involved in innate and adaptive immune responses, controlling for instance the survival of myeloid-derived suppressor cells (By similarity). Binds to the immune cell receptor LILRB4 (PubMed:30333625). APOE may also play a role in transcription regulation through a receptor-dependent and cholesterol-independent mechanism, that activates MAP3K12 and a non-canonical MAPK signal transduction pathway that results in enhanced AP-1-mediated transcription of APP (PubMed:28111074).</text>
</comment>
<comment type="function">
    <text evidence="38 48">(Microbial infection) Through its interaction with HCV envelope glycoprotein E2, participates in the attachment of HCV to HSPGs and other receptors (LDLr, VLDLr, and SR-B1) on the cell surface and to the assembly, maturation and infectivity of HCV viral particles (PubMed:25122793, PubMed:29695434). This interaction is probably promoted via the up-regulation of cellular autophagy by the virus (PubMed:29695434).</text>
</comment>
<comment type="subunit">
    <text evidence="14 34 41 51 62 63 68 70">Homotetramer (PubMed:8340399). May interact with ABCA1; functionally associated with ABCA1 in the biogenesis of HDLs (PubMed:14754908). May interact with APP/A4 amyloid-beta peptide; the interaction is extremely stable in vitro but its physiological significance is unclear (PubMed:23620513, PubMed:8367470). May interact with MAPT (PubMed:7972031). May interact with MAP2 (PubMed:7891887). In the cerebrospinal fluid, interacts with secreted SORL1 (PubMed:30448281). Interacts with PMEL; this allows the loading of PMEL luminal fragment on ILVs to induce fibril nucleation.</text>
</comment>
<comment type="subunit">
    <text evidence="38 48">(Microbial infection) Interacts with hepatitis C virus (HCV) envelope glycoprotein E2; this interaction is required for HCV infectivity and production.</text>
</comment>
<comment type="interaction">
    <interactant intactId="EBI-1222467">
        <id>P02649</id>
    </interactant>
    <interactant intactId="EBI-3916527">
        <id>Q9UIJ7</id>
        <label>AK3</label>
    </interactant>
    <organismsDiffer>false</organismsDiffer>
    <experiments>3</experiments>
</comment>
<comment type="interaction">
    <interactant intactId="EBI-1222467">
        <id>P02649</id>
    </interactant>
    <interactant intactId="EBI-25646567">
        <id>Q06481-5</id>
        <label>APLP2</label>
    </interactant>
    <organismsDiffer>false</organismsDiffer>
    <experiments>3</experiments>
</comment>
<comment type="interaction">
    <interactant intactId="EBI-1222467">
        <id>P02649</id>
    </interactant>
    <interactant intactId="EBI-2431589">
        <id>PRO_0000000093</id>
        <label>APP</label>
        <dbReference type="UniProtKB" id="P05067"/>
    </interactant>
    <organismsDiffer>false</organismsDiffer>
    <experiments>4</experiments>
</comment>
<comment type="interaction">
    <interactant intactId="EBI-1222467">
        <id>P02649</id>
    </interactant>
    <interactant intactId="EBI-25832286">
        <id>Q9HBG4</id>
        <label>ATP6V0A4</label>
    </interactant>
    <organismsDiffer>false</organismsDiffer>
    <experiments>3</experiments>
</comment>
<comment type="interaction">
    <interactant intactId="EBI-1222467">
        <id>P02649</id>
    </interactant>
    <interactant intactId="EBI-9088162">
        <id>Q9NUB4</id>
        <label>C20orf141</label>
    </interactant>
    <organismsDiffer>false</organismsDiffer>
    <experiments>3</experiments>
</comment>
<comment type="interaction">
    <interactant intactId="EBI-1222467">
        <id>P02649</id>
    </interactant>
    <interactant intactId="EBI-6677628">
        <id>P02748</id>
        <label>C9</label>
    </interactant>
    <organismsDiffer>false</organismsDiffer>
    <experiments>2</experiments>
</comment>
<comment type="interaction">
    <interactant intactId="EBI-1222467">
        <id>P02649</id>
    </interactant>
    <interactant intactId="EBI-295634">
        <id>Q16543</id>
        <label>CDC37</label>
    </interactant>
    <organismsDiffer>false</organismsDiffer>
    <experiments>3</experiments>
</comment>
<comment type="interaction">
    <interactant intactId="EBI-1222467">
        <id>P02649</id>
    </interactant>
    <interactant intactId="EBI-1223708">
        <id>P08603</id>
        <label>CFH</label>
    </interactant>
    <organismsDiffer>false</organismsDiffer>
    <experiments>8</experiments>
</comment>
<comment type="interaction">
    <interactant intactId="EBI-1222467">
        <id>P02649</id>
    </interactant>
    <interactant intactId="EBI-2880701">
        <id>Q9UBD9</id>
        <label>CLCF1</label>
    </interactant>
    <organismsDiffer>false</organismsDiffer>
    <experiments>3</experiments>
</comment>
<comment type="interaction">
    <interactant intactId="EBI-1222467">
        <id>P02649</id>
    </interactant>
    <interactant intactId="EBI-25832219">
        <id>Q8IUW6</id>
        <label>CLSTN3</label>
    </interactant>
    <organismsDiffer>false</organismsDiffer>
    <experiments>3</experiments>
</comment>
<comment type="interaction">
    <interactant intactId="EBI-1222467">
        <id>P02649</id>
    </interactant>
    <interactant intactId="EBI-1050897">
        <id>P26441</id>
        <label>CNTF</label>
    </interactant>
    <organismsDiffer>false</organismsDiffer>
    <experiments>3</experiments>
</comment>
<comment type="interaction">
    <interactant intactId="EBI-1222467">
        <id>P02649</id>
    </interactant>
    <interactant intactId="EBI-13328871">
        <id>Q9H6J7-2</id>
        <label>CSTPP1</label>
    </interactant>
    <organismsDiffer>false</organismsDiffer>
    <experiments>3</experiments>
</comment>
<comment type="interaction">
    <interactant intactId="EBI-1222467">
        <id>P02649</id>
    </interactant>
    <interactant intactId="EBI-3508943">
        <id>Q9H816</id>
        <label>DCLRE1B</label>
    </interactant>
    <organismsDiffer>false</organismsDiffer>
    <experiments>3</experiments>
</comment>
<comment type="interaction">
    <interactant intactId="EBI-1222467">
        <id>P02649</id>
    </interactant>
    <interactant intactId="EBI-712452">
        <id>Q9BQ95</id>
        <label>ECSIT</label>
    </interactant>
    <organismsDiffer>false</organismsDiffer>
    <experiments>4</experiments>
</comment>
<comment type="interaction">
    <interactant intactId="EBI-1222467">
        <id>P02649</id>
    </interactant>
    <interactant intactId="EBI-11748557">
        <id>Q9Y6C2-2</id>
        <label>EMILIN1</label>
    </interactant>
    <organismsDiffer>false</organismsDiffer>
    <experiments>3</experiments>
</comment>
<comment type="interaction">
    <interactant intactId="EBI-1222467">
        <id>P02649</id>
    </interactant>
    <interactant intactId="EBI-6425864">
        <id>Q3SYB3</id>
        <label>FOXD4L6</label>
    </interactant>
    <organismsDiffer>false</organismsDiffer>
    <experiments>3</experiments>
</comment>
<comment type="interaction">
    <interactant intactId="EBI-1222467">
        <id>P02649</id>
    </interactant>
    <interactant intactId="EBI-25832107">
        <id>Q8IY40</id>
        <label>GRIK2</label>
    </interactant>
    <organismsDiffer>false</organismsDiffer>
    <experiments>3</experiments>
</comment>
<comment type="interaction">
    <interactant intactId="EBI-1222467">
        <id>P02649</id>
    </interactant>
    <interactant intactId="EBI-6447217">
        <id>O75409</id>
        <label>H2AP</label>
    </interactant>
    <organismsDiffer>false</organismsDiffer>
    <experiments>3</experiments>
</comment>
<comment type="interaction">
    <interactant intactId="EBI-1222467">
        <id>P02649</id>
    </interactant>
    <interactant intactId="EBI-1220767">
        <id>P00738</id>
        <label>HP</label>
    </interactant>
    <organismsDiffer>false</organismsDiffer>
    <experiments>7</experiments>
</comment>
<comment type="interaction">
    <interactant intactId="EBI-1222467">
        <id>P02649</id>
    </interactant>
    <interactant intactId="EBI-1108377">
        <id>Q9BYZ2</id>
        <label>LDHAL6B</label>
    </interactant>
    <organismsDiffer>false</organismsDiffer>
    <experiments>3</experiments>
</comment>
<comment type="interaction">
    <interactant intactId="EBI-1222467">
        <id>P02649</id>
    </interactant>
    <interactant intactId="EBI-988319">
        <id>P01130</id>
        <label>LDLR</label>
    </interactant>
    <organismsDiffer>false</organismsDiffer>
    <experiments>4</experiments>
</comment>
<comment type="interaction">
    <interactant intactId="EBI-1222467">
        <id>P02649</id>
    </interactant>
    <interactant intactId="EBI-1048875">
        <id>P09382</id>
        <label>LGALS1</label>
    </interactant>
    <organismsDiffer>false</organismsDiffer>
    <experiments>3</experiments>
</comment>
<comment type="interaction">
    <interactant intactId="EBI-1222467">
        <id>P02649</id>
    </interactant>
    <interactant intactId="EBI-1046087">
        <id>Q07954</id>
        <label>LRP1</label>
    </interactant>
    <organismsDiffer>false</organismsDiffer>
    <experiments>23</experiments>
</comment>
<comment type="interaction">
    <interactant intactId="EBI-1222467">
        <id>P02649</id>
    </interactant>
    <interactant intactId="EBI-2681187">
        <id>Q14114</id>
        <label>LRP8</label>
    </interactant>
    <organismsDiffer>false</organismsDiffer>
    <experiments>2</experiments>
</comment>
<comment type="interaction">
    <interactant intactId="EBI-1222467">
        <id>P02649</id>
    </interactant>
    <interactant intactId="EBI-25832196">
        <id>Q14114-3</id>
        <label>LRP8</label>
    </interactant>
    <organismsDiffer>false</organismsDiffer>
    <experiments>3</experiments>
</comment>
<comment type="interaction">
    <interactant intactId="EBI-1222467">
        <id>P02649</id>
    </interactant>
    <interactant intactId="EBI-25832133">
        <id>P11137-4</id>
        <label>MAP2</label>
    </interactant>
    <organismsDiffer>false</organismsDiffer>
    <experiments>3</experiments>
</comment>
<comment type="interaction">
    <interactant intactId="EBI-1222467">
        <id>P02649</id>
    </interactant>
    <interactant intactId="EBI-7796455">
        <id>P10636-6</id>
        <label>MAPT</label>
    </interactant>
    <organismsDiffer>false</organismsDiffer>
    <experiments>3</experiments>
</comment>
<comment type="interaction">
    <interactant intactId="EBI-1222467">
        <id>P02649</id>
    </interactant>
    <interactant intactId="EBI-9092052">
        <id>Q9Y3D2</id>
        <label>MSRB2</label>
    </interactant>
    <organismsDiffer>false</organismsDiffer>
    <experiments>3</experiments>
</comment>
<comment type="interaction">
    <interactant intactId="EBI-1222467">
        <id>P02649</id>
    </interactant>
    <interactant intactId="EBI-996616">
        <id>P02795</id>
        <label>MT2A</label>
    </interactant>
    <organismsDiffer>false</organismsDiffer>
    <experiments>3</experiments>
</comment>
<comment type="interaction">
    <interactant intactId="EBI-1222467">
        <id>P02649</id>
    </interactant>
    <interactant intactId="EBI-935824">
        <id>Q53EL6</id>
        <label>PDCD4</label>
    </interactant>
    <organismsDiffer>false</organismsDiffer>
    <experiments>3</experiments>
</comment>
<comment type="interaction">
    <interactant intactId="EBI-1222467">
        <id>P02649</id>
    </interactant>
    <interactant intactId="EBI-438710">
        <id>Q9NS23-4</id>
        <label>RASSF1</label>
    </interactant>
    <organismsDiffer>false</organismsDiffer>
    <experiments>3</experiments>
</comment>
<comment type="interaction">
    <interactant intactId="EBI-1222467">
        <id>P02649</id>
    </interactant>
    <interactant intactId="EBI-714003">
        <id>P52756</id>
        <label>RBM5</label>
    </interactant>
    <organismsDiffer>false</organismsDiffer>
    <experiments>3</experiments>
</comment>
<comment type="interaction">
    <interactant intactId="EBI-1222467">
        <id>P02649</id>
    </interactant>
    <interactant intactId="EBI-21535400">
        <id>Q6ZNA4-2</id>
        <label>RNF111</label>
    </interactant>
    <organismsDiffer>false</organismsDiffer>
    <experiments>3</experiments>
</comment>
<comment type="interaction">
    <interactant intactId="EBI-1222467">
        <id>P02649</id>
    </interactant>
    <interactant intactId="EBI-21529758">
        <id>Q8WTV0-2</id>
        <label>SCARB1</label>
    </interactant>
    <organismsDiffer>false</organismsDiffer>
    <experiments>3</experiments>
</comment>
<comment type="interaction">
    <interactant intactId="EBI-1222467">
        <id>P02649</id>
    </interactant>
    <interactant intactId="EBI-985879">
        <id>P37840</id>
        <label>SNCA</label>
    </interactant>
    <organismsDiffer>false</organismsDiffer>
    <experiments>11</experiments>
</comment>
<comment type="interaction">
    <interactant intactId="EBI-1222467">
        <id>P02649</id>
    </interactant>
    <interactant intactId="EBI-2510414">
        <id>Q8IUW3</id>
        <label>SPATA2L</label>
    </interactant>
    <organismsDiffer>false</organismsDiffer>
    <experiments>3</experiments>
</comment>
<comment type="interaction">
    <interactant intactId="EBI-1222467">
        <id>P02649</id>
    </interactant>
    <interactant intactId="EBI-357285">
        <id>P50502</id>
        <label>ST13</label>
    </interactant>
    <organismsDiffer>false</organismsDiffer>
    <experiments>3</experiments>
</comment>
<comment type="interaction">
    <interactant intactId="EBI-1222467">
        <id>P02649</id>
    </interactant>
    <interactant intactId="EBI-726731">
        <id>O75069</id>
        <label>TMCC2</label>
    </interactant>
    <organismsDiffer>false</organismsDiffer>
    <experiments>5</experiments>
</comment>
<comment type="interaction">
    <interactant intactId="EBI-1222467">
        <id>P02649</id>
    </interactant>
    <interactant intactId="EBI-2505861">
        <id>Q13829</id>
        <label>TNFAIP1</label>
    </interactant>
    <organismsDiffer>false</organismsDiffer>
    <experiments>3</experiments>
</comment>
<comment type="interaction">
    <interactant intactId="EBI-1222467">
        <id>P02649</id>
    </interactant>
    <interactant intactId="EBI-14036387">
        <id>Q9NZC2</id>
        <label>TREM2</label>
    </interactant>
    <organismsDiffer>false</organismsDiffer>
    <experiments>4</experiments>
</comment>
<comment type="interaction">
    <interactant intactId="EBI-1222467">
        <id>P02649</id>
    </interactant>
    <interactant intactId="EBI-2555404">
        <id>Q6PID6</id>
        <label>TTC33</label>
    </interactant>
    <organismsDiffer>false</organismsDiffer>
    <experiments>3</experiments>
</comment>
<comment type="interaction">
    <interactant intactId="EBI-1222467">
        <id>P02649</id>
    </interactant>
    <interactant intactId="EBI-717567">
        <id>Q8TBC4</id>
        <label>UBA3</label>
    </interactant>
    <organismsDiffer>false</organismsDiffer>
    <experiments>3</experiments>
</comment>
<comment type="interaction">
    <interactant intactId="EBI-1222467">
        <id>P02649</id>
    </interactant>
    <interactant intactId="EBI-749211">
        <id>Q9NYH9</id>
        <label>UTP6</label>
    </interactant>
    <organismsDiffer>false</organismsDiffer>
    <experiments>3</experiments>
</comment>
<comment type="interaction">
    <interactant intactId="EBI-1222467">
        <id>P02649</id>
    </interactant>
    <interactant intactId="EBI-354158">
        <id>P21796</id>
        <label>VDAC1</label>
    </interactant>
    <organismsDiffer>false</organismsDiffer>
    <experiments>2</experiments>
</comment>
<comment type="interaction">
    <interactant intactId="EBI-1222467">
        <id>P02649</id>
    </interactant>
    <interactant intactId="EBI-707773">
        <id>P17028</id>
        <label>ZNF24</label>
    </interactant>
    <organismsDiffer>false</organismsDiffer>
    <experiments>3</experiments>
</comment>
<comment type="interaction">
    <interactant intactId="EBI-1222467">
        <id>P02649</id>
    </interactant>
    <interactant intactId="EBI-6904269">
        <id>PRO_0000037570</id>
        <dbReference type="UniProtKB" id="P27958"/>
    </interactant>
    <organismsDiffer>true</organismsDiffer>
    <experiments>4</experiments>
</comment>
<comment type="interaction">
    <interactant intactId="EBI-9209835">
        <id>PRO_0000001987</id>
    </interactant>
    <interactant intactId="EBI-366182">
        <id>P10636</id>
        <label>MAPT</label>
    </interactant>
    <organismsDiffer>false</organismsDiffer>
    <experiments>3</experiments>
</comment>
<comment type="subcellular location">
    <subcellularLocation>
        <location evidence="37 50">Secreted</location>
    </subcellularLocation>
    <subcellularLocation>
        <location evidence="68">Secreted</location>
        <location evidence="68">Extracellular space</location>
    </subcellularLocation>
    <subcellularLocation>
        <location evidence="79">Secreted</location>
        <location evidence="79">Extracellular space</location>
        <location evidence="79">Extracellular matrix</location>
    </subcellularLocation>
    <subcellularLocation>
        <location evidence="41">Extracellular vesicle</location>
    </subcellularLocation>
    <subcellularLocation>
        <location evidence="41">Endosome</location>
        <location evidence="41">Multivesicular body</location>
    </subcellularLocation>
    <text evidence="20 41 68 79">In the plasma, APOE is associated with chylomicrons, chylomicrons remnants, VLDL, LDL and HDL lipoproteins (PubMed:1911868, PubMed:8340399). Lipid poor oligomeric APOE is associated with the extracellular matrix in a calcium- and heparan-sulfate proteoglycans-dependent manner (PubMed:9488694). Lipidation induces the release from the extracellular matrix (PubMed:9488694). Colocalizes with CD63 and PMEL at exosomes and in intraluminal vesicles within multivesicular endosomes.</text>
</comment>
<comment type="tissue specificity">
    <text evidence="2 52 81">Produced by several tissues and cell types and mainly found associated with lipid particles in the plasma, the interstitial fluid and lymph (PubMed:25173806). Mainly synthesized by liver hepatocytes (PubMed:25173806). Significant quantities are also produced in brain, mainly by astrocytes and glial cells in the cerebral cortex, but also by neurons in frontal cortex and hippocampus (PubMed:10027417, PubMed:3115992). It is also expressed by cells of the peripheral nervous system (PubMed:10027417, PubMed:25173806). Also expressed by adrenal gland, testis, ovary, skin, kidney, spleen and adipose tissue and macrophages in various tissues (PubMed:25173806).</text>
</comment>
<comment type="PTM">
    <text evidence="22 25 32 37 82">APOE exists as multiple glycosylated and sialylated glycoforms within cells and in plasma (PubMed:29516132). The extent of glycosylation and sialylation are tissue and context specific (PubMed:29516132). Plasma APOE undergoes desialylation and is less glycosylated and sialylated than the cellular form (PubMed:19838169, PubMed:20511397, PubMed:23234360, PubMed:2498325). Glycosylation is not required for proper expression and secretion (PubMed:2498325). O-glycosylated with core 1 or possibly core 8 glycans. Thr-307 and Ser-314 are minor glycosylation sites compared to Ser-308 (PubMed:19838169, PubMed:23234360).</text>
</comment>
<comment type="PTM">
    <text evidence="4">Glycated in plasma VLDL of normal subjects, and of hyperglycemic diabetic patients at a higher level (2-3 fold).</text>
</comment>
<comment type="PTM">
    <text evidence="40">Phosphorylated by FAM20C in the extracellular medium.</text>
</comment>
<comment type="PTM">
    <text evidence="9">Undergoes C-terminal proteolytic processing in neurons. C-terminally truncated APOE has a tendency to form neurotoxic intracellular neurofibrillary tangle-like inclusions in neurons.</text>
</comment>
<comment type="polymorphism">
    <text evidence="49 53 54 56 81">There are three common APOE alleles identified: APOE*2/APOE-epsilon2/E2, APOE*3/APOE-epsilon3/E3, and APOE*4/APOE-epsilon4/E4. The corresponding ApoE2, ApoE3 and ApoE4 isoforms differentially present Cys and Arg residues at positions 130 and 176. The most common allele in the human population is APOE*3 which sequence is the one displayed in that entry with a Cys at position 130 and an Arg at position 176. Common APOE variants influence lipoprotein metabolism in healthy individuals. Additional variants have been described and are described relative to the three common alleles. Allele APOE*4 is strongly associated with risk for severe COVID-19, increases susceptibility to SARS-CoV-2 infection in neurons and astrocytes (PubMed:33450186).</text>
</comment>
<comment type="disease" evidence="13 17 27 29 39 42 43 60 67">
    <disease id="DI-01771">
        <name>Hyperlipoproteinemia 3</name>
        <acronym>HLPP3</acronym>
        <description>A disorder characterized by the accumulation of intermediate-density lipoprotein particles (IDL or broad-beta-lipoprotein) rich in cholesterol. Clinical features include xanthomas, yellowish lipid deposits in the palmar crease, or less specific on tendons and on elbows. The disorder rarely manifests before the third decade in men. In women, it is usually expressed only after the menopause.</description>
        <dbReference type="MIM" id="617347"/>
    </disease>
    <text>The disease is caused by variants affecting the gene represented in this entry. The vast majority of the patients are homozygous for APOE*2 alleles. More severe cases of HLPP3 have also been observed in individuals heterozygous for rare APOE variants. The influence of APOE on lipid levels is often suggested to have major implications for the risk of coronary artery disease (CAD). Individuals carrying the common APOE*4 variant are at higher risk of CAD.</text>
</comment>
<comment type="disease" evidence="5 8 9 46 49 62 63 65 69 70 75">
    <disease id="DI-02694">
        <name>Alzheimer disease 2</name>
        <acronym>AD2</acronym>
        <description>A late-onset form of Alzheimer disease. Alzheimer disease is a neurodegenerative disorder characterized by progressive dementia, loss of cognitive abilities, and deposition of fibrillar amyloid proteins as intraneuronal neurofibrillary tangles, extracellular amyloid plaques and vascular amyloid deposits. The major constituents of these plaques are neurotoxic amyloid-beta protein 40 and amyloid-beta protein 42, that are produced by the proteolysis of the transmembrane APP protein. The cytotoxic C-terminal fragments (CTFs) and the caspase-cleaved products, such as C31, are also implicated in neuronal death.</description>
        <dbReference type="MIM" id="104310"/>
    </disease>
    <text evidence="69">Disease susceptibility is associated with variants affecting the gene represented in this entry. The APOE*4 allele (APOE form E4) is genetically associated with the common late onset familial and sporadic forms of Alzheimer disease. Risk for AD increased from 20% to 90% and mean age at onset decreased from 84 to 68 years with increasing number of APOE*4 alleles in 42 families with late onset AD. Thus APOE*4 gene dose is a major risk factor for late onset AD and, in these families, homozygosity for APOE*4 was virtually sufficient to cause AD by age 80. The mechanism by which APOE*4 participates in pathogenesis is not known.</text>
</comment>
<comment type="disease" evidence="7 16 29 31 36 42">
    <disease id="DI-02290">
        <name>Sea-blue histiocyte disease</name>
        <acronym>SBHD</acronym>
        <description>Characterized by splenomegaly, mild thrombocytopenia and, in the bone marrow, numerous histiocytes containing cytoplasmic granules which stain bright blue with the usual hematologic stains. The syndrome is the consequence of an inherited metabolic defect analogous to Gaucher disease and other sphingolipidoses.</description>
        <dbReference type="MIM" id="269600"/>
    </disease>
    <text>The disease is caused by variants affecting the gene represented in this entry.</text>
</comment>
<comment type="disease" evidence="3 5 19 76">
    <disease id="DI-01910">
        <name>Lipoprotein glomerulopathy</name>
        <acronym>LPG</acronym>
        <description>Uncommon kidney disease characterized by proteinuria, progressive kidney failure, and distinctive lipoprotein thrombi in glomerular capillaries.</description>
        <dbReference type="MIM" id="611771"/>
    </disease>
    <text>The disease is caused by variants affecting the gene represented in this entry.</text>
</comment>
<comment type="miscellaneous">
    <text evidence="50">Binds to and activates LILRB4 on acute myeloid leukemia (AML) cells which leads to suppression of T cell proliferation and promotion of AML cell migration and infiltration.</text>
</comment>
<comment type="similarity">
    <text evidence="84">Belongs to the apolipoprotein A1/A4/E family.</text>
</comment>
<comment type="online information" name="Wikipedia">
    <link uri="https://en.wikipedia.org/wiki/Apolipoprotein_E"/>
    <text>Apolipoprotein E entry</text>
</comment>
<comment type="online information" name="Protein Spotlight">
    <link uri="https://www.proteinspotlight.org/back_issues/083"/>
    <text>Tangled - Issue 83 of June 2007</text>
</comment>
<reference key="1">
    <citation type="journal article" date="1984" name="J. Biol. Chem.">
        <title>Synthesis, intracellular processing, and signal peptide of human apolipoprotein E.</title>
        <authorList>
            <person name="Zannis V.I."/>
            <person name="McPherson J."/>
            <person name="Goldberger G."/>
            <person name="Karathanasis S.K."/>
            <person name="Breslow J.L."/>
        </authorList>
    </citation>
    <scope>NUCLEOTIDE SEQUENCE [MRNA] (ALLELE APOE*3)</scope>
</reference>
<reference key="2">
    <citation type="journal article" date="1984" name="J. Biol. Chem.">
        <title>Human apolipoprotein E mRNA. cDNA cloning and nucleotide sequencing of a new variant.</title>
        <authorList>
            <person name="McLean J.W."/>
            <person name="Elshourbagy N.A."/>
            <person name="Chang D.J."/>
            <person name="Mahley R.W."/>
            <person name="Taylor J.M."/>
        </authorList>
    </citation>
    <scope>NUCLEOTIDE SEQUENCE [MRNA]</scope>
    <scope>VARIANTS THR-117 AND PRO-170</scope>
</reference>
<reference key="3">
    <citation type="journal article" date="1985" name="Proc. Natl. Acad. Sci. U.S.A.">
        <title>Nucleotide sequence and structure of the human apolipoprotein E gene.</title>
        <authorList>
            <person name="Paik Y.-K."/>
            <person name="Chang D.J."/>
            <person name="Reardon C.A."/>
            <person name="Davies G.E."/>
            <person name="Mahley R.W."/>
            <person name="Taylor J.M."/>
        </authorList>
    </citation>
    <scope>NUCLEOTIDE SEQUENCE [GENOMIC DNA] (ALLELE APOE*4)</scope>
    <scope>VARIANT AD2 ARG-130</scope>
</reference>
<reference key="4">
    <citation type="journal article" date="1988" name="Genomics">
        <title>Genotyping and sequence analysis of apolipoprotein E isoforms.</title>
        <authorList>
            <person name="Emi M."/>
            <person name="Wu L.L."/>
            <person name="Robertson M.A."/>
            <person name="Myers R.L."/>
            <person name="Hegele R.A."/>
            <person name="Williams R.R."/>
            <person name="White R."/>
            <person name="Lalouel J.-M."/>
        </authorList>
    </citation>
    <scope>NUCLEOTIDE SEQUENCE [GENOMIC DNA] (ALLELE APOE*2)</scope>
    <scope>VARIANT CYS-176</scope>
</reference>
<reference key="5">
    <citation type="journal article" date="1998" name="DNA Seq.">
        <title>Sequencing of 42kb of the APO E-C2 gene cluster reveals a new gene: PEREC1.</title>
        <authorList>
            <person name="Freitas E.M."/>
            <person name="Zhang W.J."/>
            <person name="Lalonde J.P."/>
            <person name="Tay G.K."/>
            <person name="Gaudieri S."/>
            <person name="Ashworth L.K."/>
            <person name="Van Bockxmeer F.M."/>
            <person name="Dawkins R.L."/>
        </authorList>
    </citation>
    <scope>NUCLEOTIDE SEQUENCE [GENOMIC DNA] (ALLELE APOE*3)</scope>
</reference>
<reference key="6">
    <citation type="journal article" date="2000" name="Genome Res.">
        <title>Sequence diversity and large-scale typing of SNPs in the human apolipoprotein E gene.</title>
        <authorList>
            <person name="Nickerson D.A."/>
            <person name="Taylor S.L."/>
            <person name="Fullerton S.M."/>
            <person name="Weiss K.M."/>
            <person name="Clark A.G."/>
            <person name="Stengard J.H."/>
            <person name="Salomaa V."/>
            <person name="Boerwinkle E."/>
            <person name="Sing C.F."/>
        </authorList>
    </citation>
    <scope>NUCLEOTIDE SEQUENCE [GENOMIC DNA] (ALLELE APOE*3)</scope>
    <scope>VARIANTS PRO-46; ARG-130; CYS-163 AND CYS-176</scope>
</reference>
<reference key="7">
    <citation type="journal article" date="2004" name="Nat. Genet.">
        <title>Complete sequencing and characterization of 21,243 full-length human cDNAs.</title>
        <authorList>
            <person name="Ota T."/>
            <person name="Suzuki Y."/>
            <person name="Nishikawa T."/>
            <person name="Otsuki T."/>
            <person name="Sugiyama T."/>
            <person name="Irie R."/>
            <person name="Wakamatsu A."/>
            <person name="Hayashi K."/>
            <person name="Sato H."/>
            <person name="Nagai K."/>
            <person name="Kimura K."/>
            <person name="Makita H."/>
            <person name="Sekine M."/>
            <person name="Obayashi M."/>
            <person name="Nishi T."/>
            <person name="Shibahara T."/>
            <person name="Tanaka T."/>
            <person name="Ishii S."/>
            <person name="Yamamoto J."/>
            <person name="Saito K."/>
            <person name="Kawai Y."/>
            <person name="Isono Y."/>
            <person name="Nakamura Y."/>
            <person name="Nagahari K."/>
            <person name="Murakami K."/>
            <person name="Yasuda T."/>
            <person name="Iwayanagi T."/>
            <person name="Wagatsuma M."/>
            <person name="Shiratori A."/>
            <person name="Sudo H."/>
            <person name="Hosoiri T."/>
            <person name="Kaku Y."/>
            <person name="Kodaira H."/>
            <person name="Kondo H."/>
            <person name="Sugawara M."/>
            <person name="Takahashi M."/>
            <person name="Kanda K."/>
            <person name="Yokoi T."/>
            <person name="Furuya T."/>
            <person name="Kikkawa E."/>
            <person name="Omura Y."/>
            <person name="Abe K."/>
            <person name="Kamihara K."/>
            <person name="Katsuta N."/>
            <person name="Sato K."/>
            <person name="Tanikawa M."/>
            <person name="Yamazaki M."/>
            <person name="Ninomiya K."/>
            <person name="Ishibashi T."/>
            <person name="Yamashita H."/>
            <person name="Murakawa K."/>
            <person name="Fujimori K."/>
            <person name="Tanai H."/>
            <person name="Kimata M."/>
            <person name="Watanabe M."/>
            <person name="Hiraoka S."/>
            <person name="Chiba Y."/>
            <person name="Ishida S."/>
            <person name="Ono Y."/>
            <person name="Takiguchi S."/>
            <person name="Watanabe S."/>
            <person name="Yosida M."/>
            <person name="Hotuta T."/>
            <person name="Kusano J."/>
            <person name="Kanehori K."/>
            <person name="Takahashi-Fujii A."/>
            <person name="Hara H."/>
            <person name="Tanase T.-O."/>
            <person name="Nomura Y."/>
            <person name="Togiya S."/>
            <person name="Komai F."/>
            <person name="Hara R."/>
            <person name="Takeuchi K."/>
            <person name="Arita M."/>
            <person name="Imose N."/>
            <person name="Musashino K."/>
            <person name="Yuuki H."/>
            <person name="Oshima A."/>
            <person name="Sasaki N."/>
            <person name="Aotsuka S."/>
            <person name="Yoshikawa Y."/>
            <person name="Matsunawa H."/>
            <person name="Ichihara T."/>
            <person name="Shiohata N."/>
            <person name="Sano S."/>
            <person name="Moriya S."/>
            <person name="Momiyama H."/>
            <person name="Satoh N."/>
            <person name="Takami S."/>
            <person name="Terashima Y."/>
            <person name="Suzuki O."/>
            <person name="Nakagawa S."/>
            <person name="Senoh A."/>
            <person name="Mizoguchi H."/>
            <person name="Goto Y."/>
            <person name="Shimizu F."/>
            <person name="Wakebe H."/>
            <person name="Hishigaki H."/>
            <person name="Watanabe T."/>
            <person name="Sugiyama A."/>
            <person name="Takemoto M."/>
            <person name="Kawakami B."/>
            <person name="Yamazaki M."/>
            <person name="Watanabe K."/>
            <person name="Kumagai A."/>
            <person name="Itakura S."/>
            <person name="Fukuzumi Y."/>
            <person name="Fujimori Y."/>
            <person name="Komiyama M."/>
            <person name="Tashiro H."/>
            <person name="Tanigami A."/>
            <person name="Fujiwara T."/>
            <person name="Ono T."/>
            <person name="Yamada K."/>
            <person name="Fujii Y."/>
            <person name="Ozaki K."/>
            <person name="Hirao M."/>
            <person name="Ohmori Y."/>
            <person name="Kawabata A."/>
            <person name="Hikiji T."/>
            <person name="Kobatake N."/>
            <person name="Inagaki H."/>
            <person name="Ikema Y."/>
            <person name="Okamoto S."/>
            <person name="Okitani R."/>
            <person name="Kawakami T."/>
            <person name="Noguchi S."/>
            <person name="Itoh T."/>
            <person name="Shigeta K."/>
            <person name="Senba T."/>
            <person name="Matsumura K."/>
            <person name="Nakajima Y."/>
            <person name="Mizuno T."/>
            <person name="Morinaga M."/>
            <person name="Sasaki M."/>
            <person name="Togashi T."/>
            <person name="Oyama M."/>
            <person name="Hata H."/>
            <person name="Watanabe M."/>
            <person name="Komatsu T."/>
            <person name="Mizushima-Sugano J."/>
            <person name="Satoh T."/>
            <person name="Shirai Y."/>
            <person name="Takahashi Y."/>
            <person name="Nakagawa K."/>
            <person name="Okumura K."/>
            <person name="Nagase T."/>
            <person name="Nomura N."/>
            <person name="Kikuchi H."/>
            <person name="Masuho Y."/>
            <person name="Yamashita R."/>
            <person name="Nakai K."/>
            <person name="Yada T."/>
            <person name="Nakamura Y."/>
            <person name="Ohara O."/>
            <person name="Isogai T."/>
            <person name="Sugano S."/>
        </authorList>
    </citation>
    <scope>NUCLEOTIDE SEQUENCE [LARGE SCALE MRNA] (ALLELE APOE*3)</scope>
    <source>
        <tissue>Cerebellum</tissue>
    </source>
</reference>
<reference key="8">
    <citation type="submission" date="2008-12" db="EMBL/GenBank/DDBJ databases">
        <authorList>
            <consortium name="NHLBI resequencing and genotyping service (RS&amp;G)"/>
        </authorList>
    </citation>
    <scope>NUCLEOTIDE SEQUENCE [GENOMIC DNA] (ALLELE APOE*3)</scope>
</reference>
<reference key="9">
    <citation type="journal article" date="2004" name="Genome Res.">
        <title>The status, quality, and expansion of the NIH full-length cDNA project: the Mammalian Gene Collection (MGC).</title>
        <authorList>
            <consortium name="The MGC Project Team"/>
        </authorList>
    </citation>
    <scope>NUCLEOTIDE SEQUENCE [LARGE SCALE MRNA] (ALLELE APOE*3)</scope>
    <source>
        <tissue>Eye</tissue>
    </source>
</reference>
<reference key="10">
    <citation type="submission" date="1999-11" db="EMBL/GenBank/DDBJ databases">
        <title>A new apolipoprotein E variant (Gln46--&gt;His).</title>
        <authorList>
            <person name="Imura T."/>
            <person name="Kimura H."/>
            <person name="Kawasaki M."/>
        </authorList>
    </citation>
    <scope>NUCLEOTIDE SEQUENCE [GENOMIC DNA] OF 16-78</scope>
    <scope>VARIANT HIS-64</scope>
    <source>
        <tissue>Blood</tissue>
    </source>
</reference>
<reference key="11">
    <citation type="journal article" date="1982" name="J. Biol. Chem.">
        <title>Identification and DNA sequence of a human apolipoprotein E cDNA clone.</title>
        <authorList>
            <person name="Breslow J.L."/>
            <person name="McPherson J."/>
            <person name="Nussbaum A.L."/>
            <person name="Williams H.W."/>
            <person name="Lofquist-Kahl F."/>
            <person name="Karathanasis S.K."/>
            <person name="Zannis V.I."/>
        </authorList>
    </citation>
    <scope>NUCLEOTIDE SEQUENCE [MRNA] OF 99-317 (ALLELE APOE*3)</scope>
</reference>
<reference key="12">
    <citation type="journal article" date="1983" name="J. Biol. Chem.">
        <authorList>
            <person name="Breslow J.L."/>
            <person name="McPherson J."/>
            <person name="Nussbaum A.L."/>
            <person name="Williams H.W."/>
            <person name="Lofquist-Kahl F."/>
            <person name="Karathanasis S.K."/>
            <person name="Zannis V.I."/>
        </authorList>
    </citation>
    <scope>ERRATUM OF PUBMED:6897404</scope>
</reference>
<reference key="13">
    <citation type="journal article" date="1982" name="J. Biol. Chem.">
        <title>Human apolipoprotein E. The complete amino acid sequence.</title>
        <authorList>
            <person name="Rall S.C. Jr."/>
            <person name="Weisgraber K.H."/>
            <person name="Mahley R.W."/>
        </authorList>
    </citation>
    <scope>PROTEIN SEQUENCE OF 19-317 (ALLELE APOE*2)</scope>
</reference>
<reference key="14">
    <citation type="journal article" date="1983" name="Biochim. Biophys. Acta">
        <title>Cholesteryl ester and apolipoprotein E transfer between human high density lipoproteins and chylomicrons.</title>
        <authorList>
            <person name="Marcel Y.L."/>
            <person name="Vezina C."/>
            <person name="Milne R.W."/>
        </authorList>
    </citation>
    <scope>FUNCTION IN LIPOPROTEINS CONVERSION</scope>
</reference>
<reference key="15">
    <citation type="journal article" date="1986" name="Biochem. Biophys. Res. Commun.">
        <title>Binding of a high reactive heparin to human apolipoprotein E: identification of two heparin-binding domains.</title>
        <authorList>
            <person name="Cardin A.D."/>
            <person name="Hirose N."/>
            <person name="Blankenship D.T."/>
            <person name="Jackson R.L."/>
            <person name="Harmony J.A.K."/>
            <person name="Sparrow D.A."/>
            <person name="Sparrow J.T."/>
        </authorList>
    </citation>
    <scope>HEPARIN-BINDING SITES</scope>
</reference>
<reference key="16">
    <citation type="journal article" date="1987" name="J. Biol. Chem.">
        <title>Lipoproteins and their receptors in the central nervous system. Characterization of the lipoproteins in cerebrospinal fluid and identification of apolipoprotein B,E(LDL) receptors in the brain.</title>
        <authorList>
            <person name="Pitas R.E."/>
            <person name="Boyles J.K."/>
            <person name="Lee S.H."/>
            <person name="Hui D."/>
            <person name="Weisgraber K.H."/>
        </authorList>
    </citation>
    <scope>TISSUE SPECIFICITY</scope>
</reference>
<reference key="17">
    <citation type="journal article" date="2019" name="Clin. Chim. Acta">
        <title>Soluble LR11 competes with amyloid beta in binding to cerebrospinal fluid-high-density lipoprotein.</title>
        <authorList>
            <person name="Yano K."/>
            <person name="Hirayama S."/>
            <person name="Misawa N."/>
            <person name="Furuta A."/>
            <person name="Ueno T."/>
            <person name="Motoi Y."/>
            <person name="Seino U."/>
            <person name="Ebinuma H."/>
            <person name="Ikeuchi T."/>
            <person name="Schneider W.J."/>
            <person name="Bujo H."/>
            <person name="Miida T."/>
        </authorList>
    </citation>
    <scope>INTERACTION WITH SORL1</scope>
</reference>
<reference key="18">
    <citation type="journal article" date="1988" name="J. Biol. Chem.">
        <title>Site-specific mutagenesis of human apolipoprotein E. Receptor binding activity of variants with single amino acid substitutions.</title>
        <authorList>
            <person name="Lalazar A."/>
            <person name="Weisgraber K.H."/>
            <person name="Rall S.C. Jr."/>
            <person name="Giladi H."/>
            <person name="Innerarity T.L."/>
            <person name="Levanon A.Z."/>
            <person name="Boyles J.K."/>
            <person name="Amit B."/>
            <person name="Gorecki M."/>
            <person name="Mahley R.W."/>
        </authorList>
    </citation>
    <scope>CHARACTERIZATION OF VARIANTS SER-154 AND PRO-170</scope>
    <scope>MUTAGENESIS OF SER-157; HIS-158; LYS-161; LEU-162; LEU-167 AND ARG-168</scope>
</reference>
<reference key="19">
    <citation type="journal article" date="1989" name="J. Biol. Chem.">
        <title>Glycosylation of human apolipoprotein E. The carbohydrate attachment site is threonine 194.</title>
        <authorList>
            <person name="Wernette-Hammond M.E."/>
            <person name="Lauer S.J."/>
            <person name="Corsini A."/>
            <person name="Walker D."/>
            <person name="Taylor J.M."/>
            <person name="Rall S.C. Jr."/>
        </authorList>
    </citation>
    <scope>SUBCELLULAR LOCATION</scope>
    <scope>GLYCOSYLATION AT THR-212</scope>
    <scope>MUTAGENESIS OF THR-212</scope>
</reference>
<reference key="20">
    <citation type="journal article" date="1989" name="Proc. Natl. Acad. Sci. U.S.A.">
        <title>Low density lipoprotein receptor-related protein mediates uptake of cholesteryl esters derived from apoprotein E-enriched lipoproteins.</title>
        <authorList>
            <person name="Kowal R.C."/>
            <person name="Herz J."/>
            <person name="Goldstein J.L."/>
            <person name="Esser V."/>
            <person name="Brown M.S."/>
        </authorList>
    </citation>
    <scope>FUNCTION IN VLDL CLEARANCE</scope>
</reference>
<reference key="21">
    <citation type="journal article" date="1990" name="J. Lipid Res.">
        <title>Apolipoprotein E distribution among human plasma lipoproteins: role of the cysteine-arginine interchange at residue 112.</title>
        <authorList>
            <person name="Weisgraber K.H."/>
        </authorList>
    </citation>
    <scope>REGION</scope>
    <scope>CHARACTERIZATION OF VARIANT ARG-130 AND ARG-176</scope>
</reference>
<reference key="22">
    <citation type="journal article" date="1991" name="Biochim. Biophys. Acta">
        <title>Effects of exogenous apo E-3 and of cholesterol-enriched meals on the cellular metabolism of human chylomicrons and their remnants.</title>
        <authorList>
            <person name="Arnon R."/>
            <person name="Sehayek E."/>
            <person name="Vogel T."/>
            <person name="Eisenberg S."/>
        </authorList>
    </citation>
    <scope>FUNCTION IN CHYLOMICRONS CLEARANCE</scope>
    <scope>SUBCELLULAR LOCATION</scope>
</reference>
<reference key="23">
    <citation type="journal article" date="1991" name="J. Biol. Chem.">
        <title>Mechanisms of inhibition by apolipoprotein C of apolipoprotein E-dependent cellular metabolism of human triglyceride-rich lipoproteins through the low density lipoprotein receptor pathway.</title>
        <authorList>
            <person name="Sehayek E."/>
            <person name="Eisenberg S."/>
        </authorList>
    </citation>
    <scope>FUNCTION IN VLDL AND IDL CLEARANCE</scope>
</reference>
<reference key="24">
    <citation type="journal article" date="1993" name="J. Biol. Chem.">
        <title>Discrete carboxyl-terminal segments of apolipoprotein E mediate lipoprotein association and protein oligomerization.</title>
        <authorList>
            <person name="Westerlund J.A."/>
            <person name="Weisgraber K.H."/>
        </authorList>
    </citation>
    <scope>SUBUNIT</scope>
    <scope>SUBCELLULAR LOCATION</scope>
    <scope>REGION</scope>
</reference>
<reference key="25">
    <citation type="journal article" date="1993" name="Proc. Natl. Acad. Sci. U.S.A.">
        <title>Binding of human apolipoprotein E to synthetic amyloid beta peptide: isoform-specific effects and implications for late-onset Alzheimer disease.</title>
        <authorList>
            <person name="Strittmatter W.J."/>
            <person name="Weisgraber K.H."/>
            <person name="Huang D.Y."/>
            <person name="Dong L.M."/>
            <person name="Salvesen G.S."/>
            <person name="Pericak-Vance M."/>
            <person name="Schmechel D."/>
            <person name="Saunders A.M."/>
            <person name="Goldgaber D."/>
            <person name="Roses A.D."/>
        </authorList>
    </citation>
    <scope>INTERACTION WITH APP/A4 AMYLOID-BETA PEPTIDE</scope>
    <scope>CHARACTERIZATION OF VARIANT AD2 ARG-130</scope>
</reference>
<reference key="26">
    <citation type="journal article" date="1994" name="Neurosci. Lett.">
        <title>Isoform-specific interactions of apolipoprotein E with the microtubule-associated protein MAP2c: implications for Alzheimer's disease.</title>
        <authorList>
            <person name="Huang D.Y."/>
            <person name="Goedert M."/>
            <person name="Jakes R."/>
            <person name="Weisgraber K.H."/>
            <person name="Garner C.C."/>
            <person name="Saunders A.M."/>
            <person name="Pericak-Vance M.A."/>
            <person name="Schmechel D.E."/>
            <person name="Roses A.D."/>
            <person name="Strittmatter W.J."/>
        </authorList>
    </citation>
    <scope>INTERACTION WITH MAP2</scope>
    <scope>CHARACTERIZATION OF VARIANT AD2 ARG-130</scope>
</reference>
<reference key="27">
    <citation type="journal article" date="1994" name="Proc. Natl. Acad. Sci. U.S.A.">
        <title>Isoform-specific interactions of apolipoprotein E with microtubule-associated protein tau: implications for Alzheimer disease.</title>
        <authorList>
            <person name="Strittmatter W.J."/>
            <person name="Saunders A.M."/>
            <person name="Goedert M."/>
            <person name="Weisgraber K.H."/>
            <person name="Dong L.M."/>
            <person name="Jakes R."/>
            <person name="Huang D.Y."/>
            <person name="Pericak-Vance M."/>
            <person name="Schmechel D."/>
            <person name="Roses A.D."/>
        </authorList>
    </citation>
    <scope>INTERACTION WITH MAPT</scope>
    <scope>CHARACTERIZATION OF VARIANT AD2 ARG-130</scope>
</reference>
<reference key="28">
    <citation type="journal article" date="1995" name="J. Biol. Chem.">
        <title>Identification of glycoprotein 330 as an endocytic receptor for apolipoprotein J/clusterin.</title>
        <authorList>
            <person name="Kounnas M.Z."/>
            <person name="Loukinova E.B."/>
            <person name="Stefansson S."/>
            <person name="Harmony J.A.K."/>
            <person name="Brewer B.H."/>
            <person name="Strickland D.K."/>
            <person name="Argraves W.S."/>
        </authorList>
    </citation>
    <scope>FUNCTION</scope>
    <scope>LRP2-BINDING</scope>
</reference>
<reference key="29">
    <citation type="journal article" date="1996" name="J. Biol. Chem.">
        <title>Apolipoprotein E-containing high density lipoprotein promotes neurite outgrowth and is a ligand for the low density lipoprotein receptor-related protein.</title>
        <authorList>
            <person name="Fagan A.M."/>
            <person name="Bu G."/>
            <person name="Sun Y."/>
            <person name="Daugherty A."/>
            <person name="Holtzman D.M."/>
        </authorList>
    </citation>
    <scope>FUNCTION IN NEURITE OUTGROWTH</scope>
    <scope>LRP-BINDING</scope>
    <scope>CHARACTERIZATION OF VARIANT AD2 ARG-130</scope>
</reference>
<reference key="30">
    <citation type="journal article" date="1997" name="J. Biol. Chem.">
        <title>Heparan sulfate proteoglycans participate in hepatic lipase and apolipoprotein E-mediated binding and uptake of plasma lipoproteins, including high density lipoproteins.</title>
        <authorList>
            <person name="Ji Z.S."/>
            <person name="Dichek H.L."/>
            <person name="Miranda R.D."/>
            <person name="Mahley R.W."/>
        </authorList>
    </citation>
    <scope>FUNCTION IN HDL CLEARANCE</scope>
    <scope>HEPARAN SULFATE-BINDING</scope>
</reference>
<reference key="31">
    <citation type="journal article" date="1998" name="J. Biol. Chem.">
        <title>The HepG2 extracellular matrix contains separate heparinase- and lipid-releasable pools of ApoE. Implications for hepatic lipoprotein metabolism.</title>
        <authorList>
            <person name="Burgess J.W."/>
            <person name="Gould D.R."/>
            <person name="Marcel Y.L."/>
        </authorList>
    </citation>
    <scope>FUNCTION</scope>
    <scope>HEPARAN-SULFATE-BINDING</scope>
    <scope>SUBCELLULAR LOCATION</scope>
</reference>
<reference key="32">
    <citation type="journal article" date="1999" name="Am. J. Pathol.">
        <title>Specific regional transcription of apolipoprotein E in human brain neurons.</title>
        <authorList>
            <person name="Xu P.T."/>
            <person name="Gilbert J.R."/>
            <person name="Qiu H.L."/>
            <person name="Ervin J."/>
            <person name="Rothrock-Christian T.R."/>
            <person name="Hulette C."/>
            <person name="Schmechel D.E."/>
        </authorList>
    </citation>
    <scope>TISSUE SPECIFICITY</scope>
</reference>
<reference key="33">
    <citation type="journal article" date="1999" name="Biochim. Biophys. Acta">
        <title>Glycation of apolipoprotein E impairs its binding to heparin: identification of the major glycation site.</title>
        <authorList>
            <person name="Shuvaev V.V."/>
            <person name="Fujii J."/>
            <person name="Kawasaki Y."/>
            <person name="Itoh H."/>
            <person name="Hamaoka R."/>
            <person name="Barbier A."/>
            <person name="Ziegler O."/>
            <person name="Siest G."/>
            <person name="Taniguchi N."/>
        </authorList>
    </citation>
    <scope>GLYCATION AT LYS-93</scope>
    <scope>IDENTIFICATION BY MASS SPECTROMETRY</scope>
</reference>
<reference key="34">
    <citation type="journal article" date="2001" name="Proc. Natl. Acad. Sci. U.S.A.">
        <title>Apolipoprotein E fragments present in Alzheimer's disease brains induce neurofibrillary tangle-like intracellular inclusions in neurons.</title>
        <authorList>
            <person name="Huang Y."/>
            <person name="Liu X.Q."/>
            <person name="Wyss-Coray T."/>
            <person name="Brecht W.J."/>
            <person name="Sanan D.A."/>
            <person name="Mahley R.W."/>
        </authorList>
    </citation>
    <scope>PTM</scope>
    <scope>CHARACTERIZATION OF VARIANT AD2 ARG-130</scope>
</reference>
<reference key="35">
    <citation type="journal article" date="2003" name="Biochemistry">
        <title>Domains of apoE required for binding to apoE receptor 2 and to phospholipids: implications for the functions of apoE in the brain.</title>
        <authorList>
            <person name="Li X."/>
            <person name="Kypreos K."/>
            <person name="Zanni E.E."/>
            <person name="Zannis V."/>
        </authorList>
    </citation>
    <scope>FUNCTION</scope>
    <scope>LRP8-BINDING</scope>
    <scope>CHARACTERIZATION OF VARIANT CYS-176</scope>
</reference>
<reference key="36">
    <citation type="journal article" date="2004" name="J. Lipid Res.">
        <title>Molecular interactions between apoE and ABCA1: impact on apoE lipidation.</title>
        <authorList>
            <person name="Krimbou L."/>
            <person name="Denis M."/>
            <person name="Haidar B."/>
            <person name="Carrier M."/>
            <person name="Marcil M."/>
            <person name="Genest J. Jr."/>
        </authorList>
    </citation>
    <scope>FUNCTION IN REVERSE CHOLESTEROL TRANSPORT</scope>
    <scope>INTERACTION WITH ABCA1</scope>
</reference>
<reference key="37">
    <citation type="journal article" date="2009" name="Nat. Methods">
        <title>Enrichment of glycopeptides for glycan structure and attachment site identification.</title>
        <authorList>
            <person name="Nilsson J."/>
            <person name="Rueetschi U."/>
            <person name="Halim A."/>
            <person name="Hesse C."/>
            <person name="Carlsohn E."/>
            <person name="Brinkmalm G."/>
            <person name="Larson G."/>
        </authorList>
    </citation>
    <scope>GLYCOSYLATION [LARGE SCALE ANALYSIS] AT THR-212; THR-307 AND SER-308</scope>
    <scope>STRUCTURE OF CARBOHYDRATES</scope>
    <source>
        <tissue>Cerebrospinal fluid</tissue>
    </source>
</reference>
<reference key="38">
    <citation type="journal article" date="2010" name="Biochemistry">
        <title>Decoding of lipoprotein-receptor interactions: properties of ligand binding modules governing interactions with apolipoprotein E.</title>
        <authorList>
            <person name="Guttman M."/>
            <person name="Prieto J.H."/>
            <person name="Croy J.E."/>
            <person name="Komives E.A."/>
        </authorList>
    </citation>
    <scope>FUNCTION</scope>
    <scope>LRP1-BINDING</scope>
    <scope>REGION</scope>
</reference>
<reference key="39">
    <citation type="journal article" date="2010" name="Mol. Cell. Proteomics">
        <title>Glycosylation and sialylation of macrophage-derived human apolipoprotein E analyzed by SDS-PAGE and mass spectrometry: evidence for a novel site of glycosylation on Ser290.</title>
        <authorList>
            <person name="Lee Y."/>
            <person name="Kockx M."/>
            <person name="Raftery M.J."/>
            <person name="Jessup W."/>
            <person name="Griffith R."/>
            <person name="Kritharides L."/>
        </authorList>
    </citation>
    <scope>GLYCOSYLATION AT SER-308</scope>
</reference>
<reference key="40">
    <citation type="journal article" date="2011" name="BMC Syst. Biol.">
        <title>Initial characterization of the human central proteome.</title>
        <authorList>
            <person name="Burkard T.R."/>
            <person name="Planyavsky M."/>
            <person name="Kaupe I."/>
            <person name="Breitwieser F.P."/>
            <person name="Buerckstuemmer T."/>
            <person name="Bennett K.L."/>
            <person name="Superti-Furga G."/>
            <person name="Colinge J."/>
        </authorList>
    </citation>
    <scope>IDENTIFICATION BY MASS SPECTROMETRY [LARGE SCALE ANALYSIS]</scope>
</reference>
<reference key="41">
    <citation type="journal article" date="2012" name="J. Proteome Res.">
        <title>Resveratrol-induced changes of the human adipocyte secretion profile.</title>
        <authorList>
            <person name="Rosenow A."/>
            <person name="Noben J.P."/>
            <person name="Jocken J."/>
            <person name="Kallendrusch S."/>
            <person name="Fischer-Posovszky P."/>
            <person name="Mariman E.C."/>
            <person name="Renes J."/>
        </authorList>
    </citation>
    <scope>IDENTIFICATION BY MASS SPECTROMETRY [LARGE SCALE ANALYSIS]</scope>
</reference>
<reference key="42">
    <citation type="journal article" date="2013" name="J. Clin. Invest.">
        <title>Apolipoproteins E and AV mediate lipoprotein clearance by hepatic proteoglycans.</title>
        <authorList>
            <person name="Gonzales J.C."/>
            <person name="Gordts P.L."/>
            <person name="Foley E.M."/>
            <person name="Esko J.D."/>
        </authorList>
    </citation>
    <scope>FUNCTION IN LIPOPROTEIN CLEARANCE</scope>
    <scope>HEPARAN-SULFATE PROTEOGLYCANS BINDING</scope>
</reference>
<reference key="43">
    <citation type="journal article" date="2013" name="J. Proteome Res.">
        <title>LC-MS/MS characterization of O-glycosylation sites and glycan structures of human cerebrospinal fluid glycoproteins.</title>
        <authorList>
            <person name="Halim A."/>
            <person name="Ruetschi U."/>
            <person name="Larson G."/>
            <person name="Nilsson J."/>
        </authorList>
    </citation>
    <scope>GLYCOSYLATION AT THR-26; THR-36 AND SER-314</scope>
    <scope>IDENTIFICATION BY MASS SPECTROMETRY</scope>
</reference>
<reference key="44">
    <citation type="journal article" date="2013" name="Proc. Natl. Acad. Sci. U.S.A.">
        <title>ApoE influences amyloid-beta (Abeta) clearance despite minimal apoE/Abeta association in physiological conditions.</title>
        <authorList>
            <person name="Verghese P.B."/>
            <person name="Castellano J.M."/>
            <person name="Garai K."/>
            <person name="Wang Y."/>
            <person name="Jiang H."/>
            <person name="Shah A."/>
            <person name="Bu G."/>
            <person name="Frieden C."/>
            <person name="Holtzman D.M."/>
        </authorList>
    </citation>
    <scope>FUNCTION IN CHOLESTEROL EFFLUX</scope>
    <scope>INTERACTION WITH APP/A4 AMYLOID-BETA PEPTIDE</scope>
</reference>
<reference key="45">
    <citation type="journal article" date="2014" name="J. Proteomics">
        <title>An enzyme assisted RP-RPLC approach for in-depth analysis of human liver phosphoproteome.</title>
        <authorList>
            <person name="Bian Y."/>
            <person name="Song C."/>
            <person name="Cheng K."/>
            <person name="Dong M."/>
            <person name="Wang F."/>
            <person name="Huang J."/>
            <person name="Sun D."/>
            <person name="Wang L."/>
            <person name="Ye M."/>
            <person name="Zou H."/>
        </authorList>
    </citation>
    <scope>PHOSPHORYLATION [LARGE SCALE ANALYSIS] AT SER-147</scope>
    <scope>IDENTIFICATION BY MASS SPECTROMETRY [LARGE SCALE ANALYSIS]</scope>
    <source>
        <tissue>Liver</tissue>
    </source>
</reference>
<reference key="46">
    <citation type="journal article" date="2014" name="J. Virol.">
        <title>Apolipoprotein E likely contributes to a maturation step of infectious hepatitis C virus particles and interacts with viral envelope glycoproteins.</title>
        <authorList>
            <person name="Lee J.Y."/>
            <person name="Acosta E.G."/>
            <person name="Stoeck I.K."/>
            <person name="Long G."/>
            <person name="Hiet M.S."/>
            <person name="Mueller B."/>
            <person name="Fackler O.T."/>
            <person name="Kallis S."/>
            <person name="Bartenschlager R."/>
        </authorList>
    </citation>
    <scope>INTERACTION WITH HCV ENVELOPE GLYCOPROTEIN E2 (MICROBIAL INFECTION)</scope>
    <scope>FUNCTION (MICROBIAL INFECTION)</scope>
</reference>
<reference key="47">
    <citation type="journal article" date="2015" name="Cell">
        <title>A single kinase generates the majority of the secreted phosphoproteome.</title>
        <authorList>
            <person name="Tagliabracci V.S."/>
            <person name="Wiley S.E."/>
            <person name="Guo X."/>
            <person name="Kinch L.N."/>
            <person name="Durrant E."/>
            <person name="Wen J."/>
            <person name="Xiao J."/>
            <person name="Cui J."/>
            <person name="Nguyen K.B."/>
            <person name="Engel J.L."/>
            <person name="Coon J.J."/>
            <person name="Grishin N."/>
            <person name="Pinna L.A."/>
            <person name="Pagliarini D.J."/>
            <person name="Dixon J.E."/>
        </authorList>
    </citation>
    <scope>PHOSPHORYLATION AT SER-147</scope>
</reference>
<reference key="48">
    <citation type="journal article" date="2015" name="Cell Rep.">
        <title>Apolipoprotein E Regulates Amyloid Formation within Endosomes of Pigment Cells.</title>
        <authorList>
            <person name="van Niel G."/>
            <person name="Bergam P."/>
            <person name="Di Cicco A."/>
            <person name="Hurbain I."/>
            <person name="Lo Cicero A."/>
            <person name="Dingli F."/>
            <person name="Palmulli R."/>
            <person name="Fort C."/>
            <person name="Potier M.C."/>
            <person name="Schurgers L.J."/>
            <person name="Loew D."/>
            <person name="Levy D."/>
            <person name="Raposo G."/>
        </authorList>
    </citation>
    <scope>SUBCELLULAR LOCATION</scope>
    <scope>INTERACTION WITH PMEL</scope>
</reference>
<reference key="49">
    <citation type="journal article" date="2017" name="Cell">
        <title>ApoE2, ApoE3, and ApoE4 Differentially Stimulate APP Transcription and Abeta Secretion.</title>
        <authorList>
            <person name="Huang Y.A."/>
            <person name="Zhou B."/>
            <person name="Wernig M."/>
            <person name="Suedhof T.C."/>
        </authorList>
    </citation>
    <scope>FUNCTION IN APP TRANSCRIPTION</scope>
    <scope>CHARACTERIZATION OF VARIANT AD2 ARG-130</scope>
</reference>
<reference key="50">
    <citation type="journal article" date="2018" name="J. Virol.">
        <title>Regulation of Apolipoprotein E Trafficking by Hepatitis C Virus-Induced Autophagy.</title>
        <authorList>
            <person name="Kim J.Y."/>
            <person name="Ou J.J."/>
        </authorList>
    </citation>
    <scope>INTERACTION WITH HCV ENVELOPE GLYCOPROTEIN E2 (MICROBIAL INFECTION)</scope>
    <scope>FUNCTION (MICROBIAL INFECTION)</scope>
</reference>
<reference key="51">
    <citation type="journal article" date="2018" name="Nature">
        <title>LILRB4 signalling in leukaemia cells mediates T cell suppression and tumour infiltration.</title>
        <authorList>
            <person name="Deng M."/>
            <person name="Gui X."/>
            <person name="Kim J."/>
            <person name="Xie L."/>
            <person name="Chen W."/>
            <person name="Li Z."/>
            <person name="He L."/>
            <person name="Chen Y."/>
            <person name="Chen H."/>
            <person name="Luo W."/>
            <person name="Lu Z."/>
            <person name="Xie J."/>
            <person name="Churchill H."/>
            <person name="Xu Y."/>
            <person name="Zhou Z."/>
            <person name="Wu G."/>
            <person name="Yu C."/>
            <person name="John S."/>
            <person name="Hirayasu K."/>
            <person name="Nguyen N."/>
            <person name="Liu X."/>
            <person name="Huang F."/>
            <person name="Li L."/>
            <person name="Deng H."/>
            <person name="Tang H."/>
            <person name="Sadek A.H."/>
            <person name="Zhang L."/>
            <person name="Huang T."/>
            <person name="Zou Y."/>
            <person name="Chen B."/>
            <person name="Zhu H."/>
            <person name="Arase H."/>
            <person name="Xia N."/>
            <person name="Jiang Y."/>
            <person name="Collins R."/>
            <person name="You M.J."/>
            <person name="Homsi J."/>
            <person name="Unni N."/>
            <person name="Lewis C."/>
            <person name="Chen G.Q."/>
            <person name="Fu Y.X."/>
            <person name="Liao X.C."/>
            <person name="An Z."/>
            <person name="Zheng J."/>
            <person name="Zhang N."/>
            <person name="Zhang C.C."/>
        </authorList>
    </citation>
    <scope>FUNCTION</scope>
    <scope>SUBCELLULAR LOCATION</scope>
    <scope>ROLE IN TUMOR CELL INFILTRATION</scope>
</reference>
<reference evidence="90" key="52">
    <citation type="journal article" date="1991" name="Science">
        <title>Three-dimensional structure of the LDL receptor-binding domain of human apolipoprotein E.</title>
        <authorList>
            <person name="Wilson C."/>
            <person name="Wardell M.R."/>
            <person name="Weisgraber K.H."/>
            <person name="Mahley R.W."/>
            <person name="Agard D.A."/>
        </authorList>
    </citation>
    <scope>X-RAY CRYSTALLOGRAPHY (2.25 ANGSTROMS) OF 41-184</scope>
    <scope>FUNCTION</scope>
    <scope>REGION</scope>
</reference>
<reference evidence="89" key="53">
    <citation type="journal article" date="1994" name="J. Biol. Chem.">
        <title>Human apolipoprotein E. Role of arginine 61 in mediating the lipoprotein preferences of the E3 and E4 isoforms.</title>
        <authorList>
            <person name="Dong L.M."/>
            <person name="Wilson C."/>
            <person name="Wardell M.R."/>
            <person name="Simmons T."/>
            <person name="Mahley R.W."/>
            <person name="Weisgraber K.H."/>
            <person name="Agard D.A."/>
        </authorList>
    </citation>
    <scope>X-RAY CRYSTALLOGRAPHY (2.50 ANGSTROMS) OF 41-184 OF VARIANT AD2 ARG-130</scope>
    <scope>CHARACTERIZATION OF VARIANT AD2 ARG-130</scope>
    <scope>MUTAGENESIS OF ARG-79 AND GLU-127</scope>
    <scope>REGION</scope>
</reference>
<reference evidence="88" key="54">
    <citation type="journal article" date="1994" name="Structure">
        <title>Salt bridge relay triggers defective LDL receptor binding by a mutant apolipoprotein.</title>
        <authorList>
            <person name="Wilson C."/>
            <person name="Mau T."/>
            <person name="Weisgraber K.H."/>
            <person name="Wardell M.R."/>
            <person name="Mahley R.W."/>
            <person name="Agard D.A."/>
        </authorList>
    </citation>
    <scope>X-RAY CRYSTALLOGRAPHY (3.00 ANGSTROMS) OF 41-184 OF VARIANT CYS-176</scope>
    <scope>CHARACTERIZATION OF VARIANT CYS-176</scope>
</reference>
<reference evidence="91 92" key="55">
    <citation type="journal article" date="1996" name="Nat. Struct. Biol.">
        <title>Novel mechanism for defective receptor binding of apolipoprotein E2 in type III hyperlipoproteinemia.</title>
        <authorList>
            <person name="Dong L.-M."/>
            <person name="Parkin S."/>
            <person name="Trakhanov S.D."/>
            <person name="Rupp B."/>
            <person name="Simmons T."/>
            <person name="Arnold K.S."/>
            <person name="Newhouse Y.M."/>
            <person name="Innerarity T.L."/>
            <person name="Weisgraber K.H."/>
        </authorList>
    </citation>
    <scope>X-RAY CRYSTALLOGRAPHY (2.0 ANGSTROMS) OF 19-209 OF VARIANT CYS-176</scope>
    <scope>MUTAGENESIS OF ASP-172</scope>
    <scope>CHARACTERIZATION OF VARIANT CYS-176</scope>
    <scope>FUNCTION</scope>
    <scope>LDLR-BINDING</scope>
</reference>
<reference evidence="87 93 94" key="56">
    <citation type="journal article" date="2000" name="Protein Sci.">
        <title>Conformational flexibility in the apolipoprotein E amino-terminal domain structure determined from three new crystal forms: implications for lipid binding.</title>
        <authorList>
            <person name="Segelke B.W."/>
            <person name="Forstner M."/>
            <person name="Knapp M."/>
            <person name="Trakhanov S.D."/>
            <person name="Parkin S."/>
            <person name="Newhouse Y.M."/>
            <person name="Bellamy H.D."/>
            <person name="Weisgraber K.H."/>
            <person name="Rupp B."/>
        </authorList>
    </citation>
    <scope>X-RAY CRYSTALLOGRAPHY (1.85 ANGSTROMS) OF 19-183</scope>
</reference>
<reference evidence="86" key="57">
    <citation type="journal article" date="2001" name="Biochemistry">
        <title>Interaction of the N-terminal domain of apolipoprotein E4 with heparin.</title>
        <authorList>
            <person name="Dong J."/>
            <person name="Peters-Libeu C.A."/>
            <person name="Weisgraber K.H."/>
            <person name="Segelke B.W."/>
            <person name="Rupp B."/>
            <person name="Capila I."/>
            <person name="Hernaiz M.J."/>
            <person name="LeBrun L.A."/>
            <person name="Linhardt R.J."/>
        </authorList>
    </citation>
    <scope>X-RAY CRYSTALLOGRAPHY (2.00 ANGSTROMS) OF 19-209 OF VARIANT AD2 ARG-130</scope>
</reference>
<reference evidence="95" key="58">
    <citation type="journal article" date="2010" name="J. Mol. Biol.">
        <title>Structure of the minimal interface between ApoE and LRP.</title>
        <authorList>
            <person name="Guttman M."/>
            <person name="Prieto J.H."/>
            <person name="Handel T.M."/>
            <person name="Domaille P.J."/>
            <person name="Komives E.A."/>
        </authorList>
    </citation>
    <scope>STRUCTURE BY NMR OF 147-167 IN COMPLEX WITH LRP1</scope>
    <scope>FUNCTION</scope>
    <scope>LRP1-BINDING</scope>
</reference>
<reference key="59">
    <citation type="journal article" date="1989" name="J. Biochem.">
        <title>Identification of human apolipoprotein E variant gene: apolipoprotein E7 (Glu244,245----Lys244,245).</title>
        <authorList>
            <person name="Maeda H."/>
            <person name="Nakamura H."/>
            <person name="Kobori S."/>
            <person name="Okada M."/>
            <person name="Mori H."/>
            <person name="Niki H."/>
            <person name="Ogura T."/>
            <person name="Hiraga S."/>
        </authorList>
    </citation>
    <scope>VARIANT HLPP3 262-GLU-GLU-263 DELINS LYS-LYS</scope>
</reference>
<reference key="60">
    <citation type="journal article" date="1989" name="J. Biochem.">
        <title>Molecular cloning of a human apolipoprotein E variant: E5 (Glu-3--&gt;Lys).</title>
        <authorList>
            <person name="Maeda H."/>
            <person name="Nakamura H."/>
            <person name="Kobori S."/>
            <person name="Okada M."/>
            <person name="Niki H."/>
            <person name="Ogura T."/>
            <person name="Hiraga S."/>
        </authorList>
    </citation>
    <scope>VARIANT LYS-21</scope>
</reference>
<reference key="61">
    <citation type="journal article" date="1989" name="J. Biol. Chem.">
        <title>Apolipoprotein E3-Leiden contains a seven-amino acid insertion that is a tandem repeat of residues 121-127.</title>
        <authorList>
            <person name="Wardell M.R."/>
            <person name="Weisgraber K.H."/>
            <person name="Havekes L.M."/>
            <person name="Rall S.C. Jr."/>
        </authorList>
    </citation>
    <scope>VARIANTS HLPP3 ARG-130 AND GLU-VAL-GLN-ALA-MET-LEU-GLY-145 INS</scope>
</reference>
<reference key="62">
    <citation type="journal article" date="1990" name="Jpn. J. Med.">
        <title>Identification and characterization of a new variant of apolipoprotein E (apo E-Kochi).</title>
        <authorList>
            <person name="Suehiro T."/>
            <person name="Yoshida K."/>
            <person name="Yamano T."/>
            <person name="Ohno F."/>
        </authorList>
    </citation>
    <scope>VARIANT HLPP3 HIS-163</scope>
</reference>
<reference key="63">
    <citation type="journal article" date="1990" name="J. Lipid Res.">
        <title>Apolipoprotein E2-Dunedin (228 Arg replaced by Cys): an apolipoprotein E2 variant with normal receptor-binding activity.</title>
        <authorList>
            <person name="Wardell M.R."/>
            <person name="Rall S.C. Jr."/>
            <person name="Brennan S.O."/>
            <person name="Nye E.R."/>
            <person name="George P.M."/>
            <person name="Janus E.D."/>
            <person name="Weisgraber K.H."/>
        </authorList>
    </citation>
    <scope>VARIANT CYS-246</scope>
</reference>
<reference key="64">
    <citation type="journal article" date="1991" name="J. Biol. Chem.">
        <title>Apolipoprotein E-4 Philadelphia (Glu-13--&gt;Lys,Arg-145--&gt;Cys). Homozygosity for two rare point mutations in the apolipoprotein E gene combined with severe type III hyperlipoproteinemia.</title>
        <authorList>
            <person name="Lohse P."/>
            <person name="Mann W.A."/>
            <person name="Stein E.A."/>
            <person name="Brewer H.B. Jr."/>
        </authorList>
    </citation>
    <scope>VARIANTS HLPP3 LYS-31 AND CYS-163</scope>
</reference>
<reference key="65">
    <citation type="journal article" date="1991" name="J. Lipid Res.">
        <title>Characterization of a new apolipoprotein E5 variant detected in two French-Canadian subjects.</title>
        <authorList>
            <person name="Mailly F."/>
            <person name="Xu C.F."/>
            <person name="Xhignesse M."/>
            <person name="Lussier-Cacan S."/>
            <person name="Talmud P.J."/>
            <person name="Davignon J."/>
            <person name="Humphries S.E."/>
            <person name="Nestruck A.C."/>
        </authorList>
    </citation>
    <scope>VARIANT APOE5 FRENCH-CANADIAN LYS-31</scope>
</reference>
<reference key="66">
    <citation type="journal article" date="1992" name="Biochem. Biophys. Res. Commun.">
        <title>Site-directed mutagenesis of an apolipoprotein E mutant, apo E5(Glu3----Lys) and its binding to low density lipoprotein receptors.</title>
        <authorList>
            <person name="Dong L.M."/>
            <person name="Yamamura T."/>
            <person name="Tajima S."/>
            <person name="Yamamoto A."/>
        </authorList>
    </citation>
    <scope>CHARACTERIZATION OF VARIANT LYS-21</scope>
    <scope>FUNCTION</scope>
    <scope>LDLR-BINDING</scope>
</reference>
<reference key="67">
    <citation type="journal article" date="1992" name="J. Lipid Res.">
        <title>Familial apolipoprotein E deficiency and type III hyperlipoproteinemia due to a premature stop codon in the apolipoprotein E gene.</title>
        <authorList>
            <person name="Lohse P."/>
            <person name="Brewer H.B. III"/>
            <person name="Meng M.S."/>
            <person name="Skarlatos S.I."/>
            <person name="LaRosa J.C."/>
            <person name="Brewer H.B. Jr."/>
        </authorList>
    </citation>
    <scope>VARIANT HLPP3 228-TRP--HIS-317 DEL</scope>
</reference>
<reference key="68">
    <citation type="journal article" date="1993" name="Am. J. Hum. Genet.">
        <title>Characterization of five new mutants in the carboxyl-terminal domain of human apolipoprotein E: no cosegregation with severe hyperlipidemia.</title>
        <authorList>
            <person name="van den Maagdenberg A.M.J.M."/>
            <person name="Weng W."/>
            <person name="de Bruijn I.H."/>
            <person name="de Knijff P."/>
            <person name="Funke H."/>
            <person name="Smelt A.H.M."/>
            <person name="Leuven J.A.G."/>
            <person name="van 't Hooft F.M."/>
            <person name="Assmann G."/>
            <person name="Hofker M.H."/>
            <person name="Havekes L.M."/>
            <person name="Frants R.R."/>
        </authorList>
    </citation>
    <scope>VARIANTS GLU-254; GLY-269; GLU-270; HIS-292 AND ARG-314</scope>
</reference>
<reference key="69">
    <citation type="journal article" date="1993" name="Electrophoresis">
        <title>Characterization of the gene for apolipoprotein E5-Frankfurt (Gln81-&gt;Lys, Cys112-&gt;Arg) by polymerase chain reaction, restriction isotyping, and temperature gradient gel electrophoresis.</title>
        <authorList>
            <person name="Ruzicka V."/>
            <person name="Maerz W."/>
            <person name="Russ A."/>
            <person name="Fisher E."/>
            <person name="Mondorf W."/>
            <person name="Gross W."/>
        </authorList>
    </citation>
    <scope>VARIANTS LYS-99 AND ARG-130</scope>
</reference>
<reference key="70">
    <citation type="journal article" date="1993" name="J. Lipid Res.">
        <title>Preferential association of apolipoprotein E Leiden with very low density lipoproteins of human plasma.</title>
        <authorList>
            <person name="Fazio S."/>
            <person name="Horie Y."/>
            <person name="Weisgraber K.H."/>
            <person name="Havekes L.M."/>
            <person name="Rall S.C. Jr."/>
        </authorList>
    </citation>
    <scope>CHARACTERIZATION OF VARIANT GLU-VAL-GLN-ALA-MET-LEU-GLY-145 INS</scope>
</reference>
<reference key="71">
    <citation type="journal article" date="1993" name="Science">
        <title>Gene dose of apolipoprotein E type 4 allele and the risk of Alzheimer's disease in late onset families.</title>
        <authorList>
            <person name="Corder E.H."/>
            <person name="Saunders A.M."/>
            <person name="Strittmatter W.J."/>
            <person name="Schmechel D.E."/>
            <person name="Gaskell P.C."/>
            <person name="Small G.W."/>
            <person name="Roses A.D."/>
            <person name="Haines J.L."/>
            <person name="Pericak-Vance M.A."/>
        </authorList>
    </citation>
    <scope>INVOLVEMENT IN AD2</scope>
    <scope>VARIANT AD2 ARG-130</scope>
</reference>
<reference key="72">
    <citation type="journal article" date="1994" name="Clin. Chem.">
        <title>Common and rare genotypes of human apolipoprotein E determined by specific restriction profiles of polymerase chain reaction-amplified DNA.</title>
        <authorList>
            <person name="Richard P."/>
            <person name="Thomas G."/>
            <person name="de Zulueta M.P."/>
            <person name="de Gennes J.-L."/>
            <person name="Thomas M."/>
            <person name="Cassaigne A."/>
            <person name="Bereziat G."/>
            <person name="Iron A."/>
        </authorList>
    </citation>
    <scope>VARIANTS HLPP3 ARG-130; SER-154; CYS-160 AND CYS-176</scope>
    <scope>VARIANT ASP-145</scope>
</reference>
<reference key="73">
    <citation type="journal article" date="1995" name="J. Clin. Invest.">
        <title>Dominant expression of type III hyperlipoproteinemia. Pathophysiological insights derived from the structural and kinetic characteristics of ApoE-1 (Lys146--&gt;Glu).</title>
        <authorList>
            <person name="Mann W.A."/>
            <person name="Lohse P."/>
            <person name="Gregg R.E."/>
            <person name="Ronan R."/>
            <person name="Hoeg J.M."/>
            <person name="Zech L.A."/>
            <person name="Brewer H.B. Jr."/>
        </authorList>
    </citation>
    <scope>VARIANT HLPP3 GLU-164</scope>
    <scope>CHARACTERIZATION OF VARIANT HLPP3 GLU-164 AND CYS-176</scope>
    <scope>FUNCTION</scope>
    <scope>LDLR-BINDING</scope>
    <scope>HEPARIN-BINDING</scope>
</reference>
<reference key="74">
    <citation type="journal article" date="1996" name="Biochim. Biophys. Acta">
        <title>Characterization of a novel variant of apolipoprotein E, E2 Fukuoka (Arg-224 --&gt; Gln) in a hyperlipidemic patient with xanthomatosis.</title>
        <authorList>
            <person name="Moriyama K."/>
            <person name="Sasaki J."/>
            <person name="Takada Y."/>
            <person name="Arakawa F."/>
            <person name="Matsunaga A."/>
            <person name="Ito Y."/>
            <person name="Arakawa K."/>
        </authorList>
    </citation>
    <scope>VARIANT GLN-242</scope>
</reference>
<reference key="75">
    <citation type="journal article" date="1997" name="J. Am. Soc. Nephrol.">
        <title>Apolipoprotein E Sendai (arginine 145--&gt;proline): a new variant associated with lipoprotein glomerulopathy.</title>
        <authorList>
            <person name="Oikawa S."/>
            <person name="Matsunaga A."/>
            <person name="Saito T."/>
            <person name="Sato H."/>
            <person name="Seki T."/>
            <person name="Hoshi K."/>
            <person name="Hayasaka K."/>
            <person name="Kotake H."/>
            <person name="Midorikawa H."/>
            <person name="Sekikawa A."/>
            <person name="Hara S."/>
            <person name="Abe K."/>
            <person name="Toyota T."/>
            <person name="Jingami H."/>
            <person name="Nakamura H."/>
            <person name="Sasaki J."/>
        </authorList>
    </citation>
    <scope>VARIANT LPG PRO-163</scope>
</reference>
<reference key="76">
    <citation type="journal article" date="1997" name="Mutat. Res.">
        <title>Apolipoprotein E R112; R251G: a carboxy-terminal variant found in patients with hyperlipidemia and coronary heart disease.</title>
        <authorList>
            <person name="Kang A.K."/>
            <person name="Jenkins D.J.A."/>
            <person name="Wolever T.M.S."/>
            <person name="Huff M.W."/>
            <person name="Maguire G.F."/>
            <person name="Connelly P.W."/>
            <person name="Hegele R.A."/>
        </authorList>
    </citation>
    <scope>VARIANTS ARG-130 AND GLY-269</scope>
</reference>
<reference key="77">
    <citation type="journal article" date="1999" name="Kidney Int.">
        <title>A novel apolipoprotein E mutation, E2 (Arg25Cys), in lipoprotein glomerulopathy.</title>
        <authorList>
            <person name="Matsunaga A."/>
            <person name="Sasaki J."/>
            <person name="Komatsu T."/>
            <person name="Kanatsu K."/>
            <person name="Tsuji E."/>
            <person name="Moriyama K."/>
            <person name="Koga T."/>
            <person name="Arakawa K."/>
            <person name="Oikawa S."/>
            <person name="Saito T."/>
            <person name="Kita T."/>
            <person name="Doi T."/>
        </authorList>
    </citation>
    <scope>VARIANT LPG CYS-43</scope>
</reference>
<reference key="78">
    <citation type="journal article" date="2000" name="J. Biol. Chem.">
        <title>Virus-mediated transduction of apolipoprotein E (ApoE)-sendai develops lipoprotein glomerulopathy in ApoE-deficient mice.</title>
        <authorList>
            <person name="Ishigaki Y."/>
            <person name="Oikawa S."/>
            <person name="Suzuki T."/>
            <person name="Usui S."/>
            <person name="Magoori K."/>
            <person name="Kim D.H."/>
            <person name="Suzuki H."/>
            <person name="Sasaki J."/>
            <person name="Sasano H."/>
            <person name="Okazaki M."/>
            <person name="Toyota T."/>
            <person name="Saito T."/>
            <person name="Yamamoto T.T."/>
        </authorList>
    </citation>
    <scope>CHARACTERIZATION OF VARIANT LPG PRO-163</scope>
    <scope>CHARACTERIZATION OF VARIANT AD2 ARG-130</scope>
</reference>
<reference key="79">
    <citation type="journal article" date="2000" name="J. Clin. Endocrinol. Metab.">
        <title>Familial splenomegaly: macrophage hypercatabolism of lipoproteins associated with apolipoprotein E mutation [apolipoprotein E (delta149 Leu)].</title>
        <authorList>
            <person name="Nguyen T.T."/>
            <person name="Kruckeberg K.E."/>
            <person name="O'Brien J.F."/>
            <person name="Ji Z.-S."/>
            <person name="Karnes P.S."/>
            <person name="Crotty T.B."/>
            <person name="Hay I.D."/>
            <person name="Mahley R.W."/>
            <person name="O'Brien T."/>
        </authorList>
    </citation>
    <scope>VARIANT SBHD LEU-167 DEL</scope>
</reference>
<reference key="80">
    <citation type="journal article" date="2003" name="Eur. J. Clin. Invest.">
        <title>Apolipoprotein E3Basel: new insights into a highly conserved protein region.</title>
        <authorList>
            <person name="Miserez A.R."/>
            <person name="Scharnagl H."/>
            <person name="Muller P.Y."/>
            <person name="Mirsaidi R."/>
            <person name="Stahelin H.B."/>
            <person name="Monsch A."/>
            <person name="Marz W."/>
            <person name="Hoffmann M.M."/>
        </authorList>
    </citation>
    <scope>VARIANT VAL-124</scope>
</reference>
<reference key="81">
    <citation type="journal article" date="2003" name="Hum. Mol. Genet.">
        <title>Association of extreme blood lipid profile phenotypic variation with 11 reverse cholesterol transport genes and 10 non-genetic cardiovascular disease risk factors.</title>
        <authorList>
            <person name="Morabia A."/>
            <person name="Cayanis E."/>
            <person name="Costanza M.C."/>
            <person name="Ross B.M."/>
            <person name="Flaherty M.S."/>
            <person name="Alvin G.B."/>
            <person name="Das K."/>
            <person name="Gilliam T.C."/>
        </authorList>
    </citation>
    <scope>VARIANTS ARG-130 AND CYS-176</scope>
</reference>
<reference key="82">
    <citation type="journal article" date="2005" name="Eur. J. Hum. Genet.">
        <title>Variable expressivity of the clinical and biochemical phenotype associated with the apolipoprotein E p.Leu149del mutation.</title>
        <authorList>
            <person name="Faivre L."/>
            <person name="Saugier-Veber P."/>
            <person name="Pais de Barros J.-P."/>
            <person name="Verges B."/>
            <person name="Couret B."/>
            <person name="Lorcerie B."/>
            <person name="Thauvin C."/>
            <person name="Charbonnier F."/>
            <person name="Huet F."/>
            <person name="Gambert P."/>
            <person name="Frebourg T."/>
            <person name="Duvillard L."/>
        </authorList>
    </citation>
    <scope>VARIANT SBHD LEU-167 DEL</scope>
</reference>
<reference key="83">
    <citation type="journal article" date="2007" name="N. Engl. J. Med.">
        <title>APOE Kyoto mutation in European Americans with lipoprotein glomerulopathy.</title>
        <authorList>
            <person name="Rovin B.H."/>
            <person name="Roncone D."/>
            <person name="McKinley A."/>
            <person name="Nadasdy T."/>
            <person name="Korbet S.M."/>
            <person name="Schwartz M.M."/>
        </authorList>
    </citation>
    <scope>VARIANT LPG CYS-43</scope>
</reference>
<reference key="84">
    <citation type="journal article" date="2011" name="J. Mol. Cell Biol.">
        <title>Quantitative detection of single amino acid polymorphisms by targeted proteomics.</title>
        <authorList>
            <person name="Su Z.D."/>
            <person name="Sun L."/>
            <person name="Yu D.X."/>
            <person name="Li R.X."/>
            <person name="Li H.X."/>
            <person name="Yu Z.J."/>
            <person name="Sheng Q.H."/>
            <person name="Lin X."/>
            <person name="Zeng R."/>
            <person name="Wu J.R."/>
        </authorList>
    </citation>
    <scope>VARIANT HIS-64</scope>
    <scope>IDENTIFICATION BY MASS SPECTROMETRY</scope>
</reference>
<reference key="85">
    <citation type="journal article" date="2012" name="Atherosclerosis">
        <title>Apolipoprotein E gene mutations in subjects with mixed hyperlipidemia and a clinical diagnosis of familial combined hyperlipidemia.</title>
        <authorList>
            <person name="Solanas-Barca M."/>
            <person name="de Castro-Oros I."/>
            <person name="Mateo-Gallego R."/>
            <person name="Cofan M."/>
            <person name="Plana N."/>
            <person name="Puzo J."/>
            <person name="Burillo E."/>
            <person name="Martin-Fuentes P."/>
            <person name="Ros E."/>
            <person name="Masana L."/>
            <person name="Pocovi M."/>
            <person name="Civeira F."/>
            <person name="Cenarro A."/>
        </authorList>
    </citation>
    <scope>VARIANT HLPP3 SER-154</scope>
    <scope>VARIANT SBHD LEU-167 DEL</scope>
</reference>
<reference key="86">
    <citation type="journal article" date="2013" name="Atherosclerosis">
        <title>APOE p.Leu167del mutation in familial hypercholesterolemia.</title>
        <authorList>
            <person name="Awan Z."/>
            <person name="Choi H.Y."/>
            <person name="Stitziel N."/>
            <person name="Ruel I."/>
            <person name="Bamimore M.A."/>
            <person name="Husa R."/>
            <person name="Gagnon M.H."/>
            <person name="Wang R.H."/>
            <person name="Peloso G.M."/>
            <person name="Hegele R.A."/>
            <person name="Seidah N.G."/>
            <person name="Kathiresan S."/>
            <person name="Genest J."/>
        </authorList>
    </citation>
    <scope>VARIANT SBHD LEU-167 DEL</scope>
</reference>
<reference key="87">
    <citation type="journal article" date="2013" name="Hum. Mutat.">
        <title>Description of a large family with autosomal dominant hypercholesterolemia associated with the APOE p.Leu167del mutation.</title>
        <authorList>
            <person name="Marduel M."/>
            <person name="Ouguerram K."/>
            <person name="Serre V."/>
            <person name="Bonnefont-Rousselot D."/>
            <person name="Marques-Pinheiro A."/>
            <person name="Erik Berge K."/>
            <person name="Devillers M."/>
            <person name="Luc G."/>
            <person name="Lecerf J.M."/>
            <person name="Tosolini L."/>
            <person name="Erlich D."/>
            <person name="Peloso G.M."/>
            <person name="Stitziel N."/>
            <person name="Nitchke P."/>
            <person name="Jais J.P."/>
            <person name="Abifadel M."/>
            <person name="Kathiresan S."/>
            <person name="Leren T.P."/>
            <person name="Rabes J.P."/>
            <person name="Boileau C."/>
            <person name="Varret M."/>
        </authorList>
    </citation>
    <scope>VARIANT SBHD LEU-167 DEL</scope>
</reference>
<reference key="88">
    <citation type="journal article" date="2016" name="J. Lipid Res.">
        <title>Global molecular analysis and APOE mutations in a cohort of autosomal dominant hypercholesterolemia patients in France.</title>
        <authorList>
            <person name="Wintjens R."/>
            <person name="Bozon D."/>
            <person name="Belabbas K."/>
            <person name="Mbou F."/>
            <person name="Girardet J.P."/>
            <person name="Tounian P."/>
            <person name="Jolly M."/>
            <person name="Boccara F."/>
            <person name="Cohen A."/>
            <person name="Karsenty A."/>
            <person name="Dubern B."/>
            <person name="Carel J.C."/>
            <person name="Azar-Kolakez A."/>
            <person name="Feillet F."/>
            <person name="Labarthe F."/>
            <person name="Gorsky A.M."/>
            <person name="Horovitz A."/>
            <person name="Tamarindi C."/>
            <person name="Kieffer P."/>
            <person name="Lienhardt A."/>
            <person name="Lascols O."/>
            <person name="Di Filippo M."/>
            <person name="Dufernez F."/>
        </authorList>
    </citation>
    <scope>VARIANTS PRO-46 AND ASP-145</scope>
    <scope>VARIANT HLPP3 CYS-163</scope>
    <scope>VARIANT SBHD LEU-167 DEL</scope>
</reference>
<reference key="89">
    <citation type="journal article" date="1994" name="Hum. Mutat.">
        <title>Genetic heterogeneity of apolipoprotein E and its influence on plasma lipid and lipoprotein levels.</title>
        <authorList>
            <person name="de Knijff P."/>
            <person name="van den Maagdenberg A.M.J.M."/>
            <person name="Frants R.R."/>
            <person name="Havekes L.M."/>
        </authorList>
    </citation>
    <scope>REVIEW</scope>
    <scope>VARIANTS LYS-31; ARG-102; ARG-130; GLN-152 AND CYS-154</scope>
</reference>
<reference key="90">
    <citation type="journal article" date="2014" name="Neurobiol. Dis.">
        <title>Apolipoprotein E: structure and function in lipid metabolism, neurobiology, and Alzheimer's diseases.</title>
        <authorList>
            <person name="Huang Y."/>
            <person name="Mahley R.W."/>
        </authorList>
    </citation>
    <scope>REVIEW</scope>
    <scope>POLYMORPHISM</scope>
    <scope>TISSUE SPECIFICITY</scope>
</reference>
<reference key="91">
    <citation type="journal article" date="2018" name="J. Mol. Med.">
        <title>Cell-specific production, secretion, and function of apolipoprotein E.</title>
        <authorList>
            <person name="Kockx M."/>
            <person name="Traini M."/>
            <person name="Kritharides L."/>
        </authorList>
    </citation>
    <scope>REVIEW</scope>
    <scope>FUNCTION</scope>
    <scope>PTM</scope>
</reference>
<reference key="92">
    <citation type="journal article" date="2021" name="Cell Stem Cell">
        <title>ApoE-Isoform-Dependent SARS-CoV-2 Neurotropism and Cellular Response.</title>
        <authorList>
            <person name="Wang C."/>
            <person name="Zhang M."/>
            <person name="Garcia G. Jr."/>
            <person name="Tian E."/>
            <person name="Cui Q."/>
            <person name="Chen X."/>
            <person name="Sun G."/>
            <person name="Wang J."/>
            <person name="Arumugaswami V."/>
            <person name="Shi Y."/>
        </authorList>
    </citation>
    <scope>POLYMORPHISM</scope>
    <scope>VARIANT ARG-130</scope>
</reference>
<organism>
    <name type="scientific">Homo sapiens</name>
    <name type="common">Human</name>
    <dbReference type="NCBI Taxonomy" id="9606"/>
    <lineage>
        <taxon>Eukaryota</taxon>
        <taxon>Metazoa</taxon>
        <taxon>Chordata</taxon>
        <taxon>Craniata</taxon>
        <taxon>Vertebrata</taxon>
        <taxon>Euteleostomi</taxon>
        <taxon>Mammalia</taxon>
        <taxon>Eutheria</taxon>
        <taxon>Euarchontoglires</taxon>
        <taxon>Primates</taxon>
        <taxon>Haplorrhini</taxon>
        <taxon>Catarrhini</taxon>
        <taxon>Hominidae</taxon>
        <taxon>Homo</taxon>
    </lineage>
</organism>
<dbReference type="EMBL" id="M12529">
    <property type="protein sequence ID" value="AAB59518.1"/>
    <property type="molecule type" value="mRNA"/>
</dbReference>
<dbReference type="EMBL" id="K00396">
    <property type="protein sequence ID" value="AAB59546.1"/>
    <property type="molecule type" value="mRNA"/>
</dbReference>
<dbReference type="EMBL" id="M10065">
    <property type="protein sequence ID" value="AAB59397.1"/>
    <property type="molecule type" value="Genomic_DNA"/>
</dbReference>
<dbReference type="EMBL" id="AF050154">
    <property type="protein sequence ID" value="AAD02505.1"/>
    <property type="molecule type" value="Genomic_DNA"/>
</dbReference>
<dbReference type="EMBL" id="AF261279">
    <property type="protein sequence ID" value="AAG27089.1"/>
    <property type="molecule type" value="Genomic_DNA"/>
</dbReference>
<dbReference type="EMBL" id="AK314898">
    <property type="protein sequence ID" value="BAG37412.1"/>
    <property type="molecule type" value="mRNA"/>
</dbReference>
<dbReference type="EMBL" id="FJ525876">
    <property type="protein sequence ID" value="ACN81314.1"/>
    <property type="molecule type" value="Genomic_DNA"/>
</dbReference>
<dbReference type="EMBL" id="BC003557">
    <property type="protein sequence ID" value="AAH03557.1"/>
    <property type="molecule type" value="mRNA"/>
</dbReference>
<dbReference type="EMBL" id="AB035149">
    <property type="protein sequence ID" value="BAA96080.1"/>
    <property type="molecule type" value="Genomic_DNA"/>
</dbReference>
<dbReference type="CCDS" id="CCDS12647.1"/>
<dbReference type="PIR" id="A92478">
    <property type="entry name" value="LPHUE"/>
</dbReference>
<dbReference type="RefSeq" id="NP_000032.1">
    <property type="nucleotide sequence ID" value="NM_000041.4"/>
</dbReference>
<dbReference type="RefSeq" id="NP_001289617.1">
    <property type="nucleotide sequence ID" value="NM_001302688.1"/>
</dbReference>
<dbReference type="RefSeq" id="NP_001289618.1">
    <property type="nucleotide sequence ID" value="NM_001302689.2"/>
</dbReference>
<dbReference type="RefSeq" id="NP_001289619.1">
    <property type="nucleotide sequence ID" value="NM_001302690.2"/>
</dbReference>
<dbReference type="RefSeq" id="NP_001289620.1">
    <property type="nucleotide sequence ID" value="NM_001302691.2"/>
</dbReference>
<dbReference type="PDB" id="1B68">
    <property type="method" value="X-ray"/>
    <property type="resolution" value="2.00 A"/>
    <property type="chains" value="A=19-209"/>
</dbReference>
<dbReference type="PDB" id="1BZ4">
    <property type="method" value="X-ray"/>
    <property type="resolution" value="1.85 A"/>
    <property type="chains" value="A=40-183"/>
</dbReference>
<dbReference type="PDB" id="1EA8">
    <property type="method" value="X-ray"/>
    <property type="resolution" value="1.95 A"/>
    <property type="chains" value="A=19-209"/>
</dbReference>
<dbReference type="PDB" id="1GS9">
    <property type="method" value="X-ray"/>
    <property type="resolution" value="1.70 A"/>
    <property type="chains" value="A=19-183"/>
</dbReference>
<dbReference type="PDB" id="1H7I">
    <property type="method" value="X-ray"/>
    <property type="resolution" value="1.90 A"/>
    <property type="chains" value="A=19-209"/>
</dbReference>
<dbReference type="PDB" id="1LE2">
    <property type="method" value="X-ray"/>
    <property type="resolution" value="3.00 A"/>
    <property type="chains" value="A=41-184"/>
</dbReference>
<dbReference type="PDB" id="1LE4">
    <property type="method" value="X-ray"/>
    <property type="resolution" value="2.50 A"/>
    <property type="chains" value="A=41-184"/>
</dbReference>
<dbReference type="PDB" id="1LPE">
    <property type="method" value="X-ray"/>
    <property type="resolution" value="2.25 A"/>
    <property type="chains" value="A=41-184"/>
</dbReference>
<dbReference type="PDB" id="1NFN">
    <property type="method" value="X-ray"/>
    <property type="resolution" value="1.80 A"/>
    <property type="chains" value="A=19-209"/>
</dbReference>
<dbReference type="PDB" id="1NFO">
    <property type="method" value="X-ray"/>
    <property type="resolution" value="2.00 A"/>
    <property type="chains" value="A=19-209"/>
</dbReference>
<dbReference type="PDB" id="1OEF">
    <property type="method" value="NMR"/>
    <property type="chains" value="A=281-304"/>
</dbReference>
<dbReference type="PDB" id="1OEG">
    <property type="method" value="NMR"/>
    <property type="chains" value="A=285-307"/>
</dbReference>
<dbReference type="PDB" id="1OR2">
    <property type="method" value="X-ray"/>
    <property type="resolution" value="2.50 A"/>
    <property type="chains" value="A=19-183"/>
</dbReference>
<dbReference type="PDB" id="1OR3">
    <property type="method" value="X-ray"/>
    <property type="resolution" value="1.73 A"/>
    <property type="chains" value="A=19-183"/>
</dbReference>
<dbReference type="PDB" id="2KC3">
    <property type="method" value="NMR"/>
    <property type="chains" value="A=19-201"/>
</dbReference>
<dbReference type="PDB" id="2KNY">
    <property type="method" value="NMR"/>
    <property type="chains" value="A=147-167"/>
</dbReference>
<dbReference type="PDB" id="2L7B">
    <property type="method" value="NMR"/>
    <property type="chains" value="A=19-317"/>
</dbReference>
<dbReference type="PDB" id="6IWB">
    <property type="method" value="X-ray"/>
    <property type="resolution" value="2.50 A"/>
    <property type="chains" value="A/C=41-186"/>
</dbReference>
<dbReference type="PDB" id="6NCN">
    <property type="method" value="X-ray"/>
    <property type="resolution" value="1.82 A"/>
    <property type="chains" value="A=19-180"/>
</dbReference>
<dbReference type="PDB" id="6NCO">
    <property type="method" value="X-ray"/>
    <property type="resolution" value="1.71 A"/>
    <property type="chains" value="A=19-180"/>
</dbReference>
<dbReference type="PDB" id="7FCR">
    <property type="method" value="X-ray"/>
    <property type="resolution" value="1.40 A"/>
    <property type="chains" value="A=19-209"/>
</dbReference>
<dbReference type="PDB" id="7FCS">
    <property type="method" value="X-ray"/>
    <property type="resolution" value="1.60 A"/>
    <property type="chains" value="A=19-209"/>
</dbReference>
<dbReference type="PDB" id="7UVJ">
    <property type="method" value="X-ray"/>
    <property type="resolution" value="1.99 A"/>
    <property type="chains" value="A/B=40-183"/>
</dbReference>
<dbReference type="PDB" id="8AX8">
    <property type="method" value="X-ray"/>
    <property type="resolution" value="1.55 A"/>
    <property type="chains" value="A=19-317"/>
</dbReference>
<dbReference type="PDB" id="8AX9">
    <property type="method" value="X-ray"/>
    <property type="resolution" value="1.55 A"/>
    <property type="chains" value="A=19-317"/>
</dbReference>
<dbReference type="PDB" id="8CDY">
    <property type="method" value="X-ray"/>
    <property type="resolution" value="1.90 A"/>
    <property type="chains" value="A=19-317"/>
</dbReference>
<dbReference type="PDB" id="8CE0">
    <property type="method" value="X-ray"/>
    <property type="resolution" value="1.75 A"/>
    <property type="chains" value="A=19-317"/>
</dbReference>
<dbReference type="PDB" id="8GRX">
    <property type="method" value="EM"/>
    <property type="resolution" value="3.00 A"/>
    <property type="chains" value="A/C=41-180"/>
</dbReference>
<dbReference type="PDBsum" id="1B68"/>
<dbReference type="PDBsum" id="1BZ4"/>
<dbReference type="PDBsum" id="1EA8"/>
<dbReference type="PDBsum" id="1GS9"/>
<dbReference type="PDBsum" id="1H7I"/>
<dbReference type="PDBsum" id="1LE2"/>
<dbReference type="PDBsum" id="1LE4"/>
<dbReference type="PDBsum" id="1LPE"/>
<dbReference type="PDBsum" id="1NFN"/>
<dbReference type="PDBsum" id="1NFO"/>
<dbReference type="PDBsum" id="1OEF"/>
<dbReference type="PDBsum" id="1OEG"/>
<dbReference type="PDBsum" id="1OR2"/>
<dbReference type="PDBsum" id="1OR3"/>
<dbReference type="PDBsum" id="2KC3"/>
<dbReference type="PDBsum" id="2KNY"/>
<dbReference type="PDBsum" id="2L7B"/>
<dbReference type="PDBsum" id="6IWB"/>
<dbReference type="PDBsum" id="6NCN"/>
<dbReference type="PDBsum" id="6NCO"/>
<dbReference type="PDBsum" id="7FCR"/>
<dbReference type="PDBsum" id="7FCS"/>
<dbReference type="PDBsum" id="7UVJ"/>
<dbReference type="PDBsum" id="8AX8"/>
<dbReference type="PDBsum" id="8AX9"/>
<dbReference type="PDBsum" id="8CDY"/>
<dbReference type="PDBsum" id="8CE0"/>
<dbReference type="PDBsum" id="8GRX"/>
<dbReference type="BMRB" id="P02649"/>
<dbReference type="EMDB" id="EMD-34216"/>
<dbReference type="SASBDB" id="P02649"/>
<dbReference type="SMR" id="P02649"/>
<dbReference type="BioGRID" id="106845">
    <property type="interactions" value="159"/>
</dbReference>
<dbReference type="CORUM" id="P02649"/>
<dbReference type="DIP" id="DIP-1120N"/>
<dbReference type="FunCoup" id="P02649">
    <property type="interactions" value="41"/>
</dbReference>
<dbReference type="IntAct" id="P02649">
    <property type="interactions" value="95"/>
</dbReference>
<dbReference type="MINT" id="P02649"/>
<dbReference type="STRING" id="9606.ENSP00000252486"/>
<dbReference type="DrugBank" id="DB09130">
    <property type="generic name" value="Copper"/>
</dbReference>
<dbReference type="DrugBank" id="DB11886">
    <property type="generic name" value="Infigratinib"/>
</dbReference>
<dbReference type="DrugBank" id="DB00877">
    <property type="generic name" value="Sirolimus"/>
</dbReference>
<dbReference type="DrugBank" id="DB00460">
    <property type="generic name" value="Verteporfin"/>
</dbReference>
<dbReference type="DrugBank" id="DB01593">
    <property type="generic name" value="Zinc"/>
</dbReference>
<dbReference type="DrugBank" id="DB14487">
    <property type="generic name" value="Zinc acetate"/>
</dbReference>
<dbReference type="DrugBank" id="DB14533">
    <property type="generic name" value="Zinc chloride"/>
</dbReference>
<dbReference type="DrugBank" id="DB14548">
    <property type="generic name" value="Zinc sulfate, unspecified form"/>
</dbReference>
<dbReference type="MoonDB" id="P02649">
    <property type="type" value="Predicted"/>
</dbReference>
<dbReference type="TCDB" id="9.B.445.2.1">
    <property type="family name" value="the apolipoprotein a2 (alp-a2) family"/>
</dbReference>
<dbReference type="CarbonylDB" id="P02649"/>
<dbReference type="GlyConnect" id="648">
    <property type="glycosylation" value="2 O-Linked glycans (5 sites)"/>
</dbReference>
<dbReference type="GlyCosmos" id="P02649">
    <property type="glycosylation" value="8 sites, 5 glycans"/>
</dbReference>
<dbReference type="GlyGen" id="P02649">
    <property type="glycosylation" value="10 sites, 7 O-linked glycans (8 sites)"/>
</dbReference>
<dbReference type="iPTMnet" id="P02649"/>
<dbReference type="MetOSite" id="P02649"/>
<dbReference type="PhosphoSitePlus" id="P02649"/>
<dbReference type="SwissPalm" id="P02649"/>
<dbReference type="BioMuta" id="APOE"/>
<dbReference type="DMDM" id="114039"/>
<dbReference type="CPTAC" id="non-CPTAC-1087"/>
<dbReference type="jPOST" id="P02649"/>
<dbReference type="MassIVE" id="P02649"/>
<dbReference type="PaxDb" id="9606-ENSP00000252486"/>
<dbReference type="PeptideAtlas" id="P02649"/>
<dbReference type="ProteomicsDB" id="51537"/>
<dbReference type="Pumba" id="P02649"/>
<dbReference type="ABCD" id="P02649">
    <property type="antibodies" value="7 sequenced antibodies"/>
</dbReference>
<dbReference type="Antibodypedia" id="3639">
    <property type="antibodies" value="1461 antibodies from 50 providers"/>
</dbReference>
<dbReference type="DNASU" id="348"/>
<dbReference type="YCharOS" id="P02649">
    <property type="antibodies" value="Tested 14 antibodies from 8 manufacturers"/>
</dbReference>
<dbReference type="Ensembl" id="ENST00000252486.9">
    <property type="protein sequence ID" value="ENSP00000252486.3"/>
    <property type="gene ID" value="ENSG00000130203.10"/>
</dbReference>
<dbReference type="GeneID" id="348"/>
<dbReference type="KEGG" id="hsa:348"/>
<dbReference type="MANE-Select" id="ENST00000252486.9">
    <property type="protein sequence ID" value="ENSP00000252486.3"/>
    <property type="RefSeq nucleotide sequence ID" value="NM_000041.4"/>
    <property type="RefSeq protein sequence ID" value="NP_000032.1"/>
</dbReference>
<dbReference type="UCSC" id="uc002pab.4">
    <property type="organism name" value="human"/>
</dbReference>
<dbReference type="AGR" id="HGNC:613"/>
<dbReference type="CTD" id="348"/>
<dbReference type="DisGeNET" id="348"/>
<dbReference type="GeneCards" id="APOE"/>
<dbReference type="HGNC" id="HGNC:613">
    <property type="gene designation" value="APOE"/>
</dbReference>
<dbReference type="HPA" id="ENSG00000130203">
    <property type="expression patterns" value="Group enriched (adrenal gland, brain, liver)"/>
</dbReference>
<dbReference type="MalaCards" id="APOE"/>
<dbReference type="MIM" id="104310">
    <property type="type" value="phenotype"/>
</dbReference>
<dbReference type="MIM" id="107741">
    <property type="type" value="gene"/>
</dbReference>
<dbReference type="MIM" id="269600">
    <property type="type" value="phenotype"/>
</dbReference>
<dbReference type="MIM" id="611771">
    <property type="type" value="phenotype"/>
</dbReference>
<dbReference type="MIM" id="617347">
    <property type="type" value="phenotype"/>
</dbReference>
<dbReference type="neXtProt" id="NX_P02649"/>
<dbReference type="OpenTargets" id="ENSG00000130203"/>
<dbReference type="Orphanet" id="412">
    <property type="disease" value="Dysbetalipoproteinemia"/>
</dbReference>
<dbReference type="Orphanet" id="329481">
    <property type="disease" value="Lipoprotein glomerulopathy"/>
</dbReference>
<dbReference type="PharmGKB" id="PA55"/>
<dbReference type="VEuPathDB" id="HostDB:ENSG00000130203"/>
<dbReference type="eggNOG" id="ENOG502QVD6">
    <property type="taxonomic scope" value="Eukaryota"/>
</dbReference>
<dbReference type="GeneTree" id="ENSGT00950000182929"/>
<dbReference type="HOGENOM" id="CLU_066029_0_0_1"/>
<dbReference type="InParanoid" id="P02649"/>
<dbReference type="OMA" id="GHMTDAR"/>
<dbReference type="OrthoDB" id="9048614at2759"/>
<dbReference type="PAN-GO" id="P02649">
    <property type="GO annotations" value="9 GO annotations based on evolutionary models"/>
</dbReference>
<dbReference type="PhylomeDB" id="P02649"/>
<dbReference type="TreeFam" id="TF334458"/>
<dbReference type="PathwayCommons" id="P02649"/>
<dbReference type="Reactome" id="R-HSA-1251985">
    <property type="pathway name" value="Nuclear signaling by ERBB4"/>
</dbReference>
<dbReference type="Reactome" id="R-HSA-3000480">
    <property type="pathway name" value="Scavenging by Class A Receptors"/>
</dbReference>
<dbReference type="Reactome" id="R-HSA-381426">
    <property type="pathway name" value="Regulation of Insulin-like Growth Factor (IGF) transport and uptake by Insulin-like Growth Factor Binding Proteins (IGFBPs)"/>
</dbReference>
<dbReference type="Reactome" id="R-HSA-8864260">
    <property type="pathway name" value="Transcriptional regulation by the AP-2 (TFAP2) family of transcription factors"/>
</dbReference>
<dbReference type="Reactome" id="R-HSA-8957275">
    <property type="pathway name" value="Post-translational protein phosphorylation"/>
</dbReference>
<dbReference type="Reactome" id="R-HSA-8963888">
    <property type="pathway name" value="Chylomicron assembly"/>
</dbReference>
<dbReference type="Reactome" id="R-HSA-8963901">
    <property type="pathway name" value="Chylomicron remodeling"/>
</dbReference>
<dbReference type="Reactome" id="R-HSA-8964026">
    <property type="pathway name" value="Chylomicron clearance"/>
</dbReference>
<dbReference type="Reactome" id="R-HSA-8964058">
    <property type="pathway name" value="HDL remodeling"/>
</dbReference>
<dbReference type="Reactome" id="R-HSA-9029569">
    <property type="pathway name" value="NR1H3 &amp; NR1H2 regulate gene expression linked to cholesterol transport and efflux"/>
</dbReference>
<dbReference type="Reactome" id="R-HSA-975634">
    <property type="pathway name" value="Retinoid metabolism and transport"/>
</dbReference>
<dbReference type="Reactome" id="R-HSA-977225">
    <property type="pathway name" value="Amyloid fiber formation"/>
</dbReference>
<dbReference type="SignaLink" id="P02649"/>
<dbReference type="SIGNOR" id="P02649"/>
<dbReference type="BioGRID-ORCS" id="348">
    <property type="hits" value="20 hits in 1163 CRISPR screens"/>
</dbReference>
<dbReference type="CD-CODE" id="DEE660B4">
    <property type="entry name" value="Stress granule"/>
</dbReference>
<dbReference type="CD-CODE" id="FB4E32DD">
    <property type="entry name" value="Presynaptic clusters and postsynaptic densities"/>
</dbReference>
<dbReference type="ChiTaRS" id="APOE">
    <property type="organism name" value="human"/>
</dbReference>
<dbReference type="EvolutionaryTrace" id="P02649"/>
<dbReference type="GeneWiki" id="Apolipoprotein_E"/>
<dbReference type="GenomeRNAi" id="348"/>
<dbReference type="Pharos" id="P02649">
    <property type="development level" value="Tbio"/>
</dbReference>
<dbReference type="PRO" id="PR:P02649"/>
<dbReference type="Proteomes" id="UP000005640">
    <property type="component" value="Chromosome 19"/>
</dbReference>
<dbReference type="RNAct" id="P02649">
    <property type="molecule type" value="protein"/>
</dbReference>
<dbReference type="Bgee" id="ENSG00000130203">
    <property type="expression patterns" value="Expressed in right adrenal gland cortex and 179 other cell types or tissues"/>
</dbReference>
<dbReference type="ExpressionAtlas" id="P02649">
    <property type="expression patterns" value="baseline and differential"/>
</dbReference>
<dbReference type="GO" id="GO:0072562">
    <property type="term" value="C:blood microparticle"/>
    <property type="evidence" value="ECO:0007005"/>
    <property type="project" value="UniProtKB"/>
</dbReference>
<dbReference type="GO" id="GO:0042627">
    <property type="term" value="C:chylomicron"/>
    <property type="evidence" value="ECO:0000314"/>
    <property type="project" value="BHF-UCL"/>
</dbReference>
<dbReference type="GO" id="GO:0034360">
    <property type="term" value="C:chylomicron remnant"/>
    <property type="evidence" value="ECO:0000314"/>
    <property type="project" value="ARUK-UCL"/>
</dbReference>
<dbReference type="GO" id="GO:0030669">
    <property type="term" value="C:clathrin-coated endocytic vesicle membrane"/>
    <property type="evidence" value="ECO:0000304"/>
    <property type="project" value="Reactome"/>
</dbReference>
<dbReference type="GO" id="GO:0062023">
    <property type="term" value="C:collagen-containing extracellular matrix"/>
    <property type="evidence" value="ECO:0007005"/>
    <property type="project" value="UniProtKB"/>
</dbReference>
<dbReference type="GO" id="GO:0005737">
    <property type="term" value="C:cytoplasm"/>
    <property type="evidence" value="ECO:0000304"/>
    <property type="project" value="UniProtKB"/>
</dbReference>
<dbReference type="GO" id="GO:0030425">
    <property type="term" value="C:dendrite"/>
    <property type="evidence" value="ECO:0000303"/>
    <property type="project" value="BHF-UCL"/>
</dbReference>
<dbReference type="GO" id="GO:0034365">
    <property type="term" value="C:discoidal high-density lipoprotein particle"/>
    <property type="evidence" value="ECO:0000304"/>
    <property type="project" value="ARUK-UCL"/>
</dbReference>
<dbReference type="GO" id="GO:0005769">
    <property type="term" value="C:early endosome"/>
    <property type="evidence" value="ECO:0000304"/>
    <property type="project" value="Reactome"/>
</dbReference>
<dbReference type="GO" id="GO:0071682">
    <property type="term" value="C:endocytic vesicle lumen"/>
    <property type="evidence" value="ECO:0000304"/>
    <property type="project" value="Reactome"/>
</dbReference>
<dbReference type="GO" id="GO:0005783">
    <property type="term" value="C:endoplasmic reticulum"/>
    <property type="evidence" value="ECO:0000314"/>
    <property type="project" value="AgBase"/>
</dbReference>
<dbReference type="GO" id="GO:0005788">
    <property type="term" value="C:endoplasmic reticulum lumen"/>
    <property type="evidence" value="ECO:0000304"/>
    <property type="project" value="Reactome"/>
</dbReference>
<dbReference type="GO" id="GO:0070062">
    <property type="term" value="C:extracellular exosome"/>
    <property type="evidence" value="ECO:0000314"/>
    <property type="project" value="UniProtKB"/>
</dbReference>
<dbReference type="GO" id="GO:0031012">
    <property type="term" value="C:extracellular matrix"/>
    <property type="evidence" value="ECO:0000314"/>
    <property type="project" value="UniProtKB"/>
</dbReference>
<dbReference type="GO" id="GO:0005576">
    <property type="term" value="C:extracellular region"/>
    <property type="evidence" value="ECO:0000314"/>
    <property type="project" value="ARUK-UCL"/>
</dbReference>
<dbReference type="GO" id="GO:0005615">
    <property type="term" value="C:extracellular space"/>
    <property type="evidence" value="ECO:0000314"/>
    <property type="project" value="UniProtKB"/>
</dbReference>
<dbReference type="GO" id="GO:1903561">
    <property type="term" value="C:extracellular vesicle"/>
    <property type="evidence" value="ECO:0007005"/>
    <property type="project" value="UniProtKB"/>
</dbReference>
<dbReference type="GO" id="GO:0098978">
    <property type="term" value="C:glutamatergic synapse"/>
    <property type="evidence" value="ECO:0000314"/>
    <property type="project" value="SynGO"/>
</dbReference>
<dbReference type="GO" id="GO:0005794">
    <property type="term" value="C:Golgi apparatus"/>
    <property type="evidence" value="ECO:0000314"/>
    <property type="project" value="AgBase"/>
</dbReference>
<dbReference type="GO" id="GO:0034364">
    <property type="term" value="C:high-density lipoprotein particle"/>
    <property type="evidence" value="ECO:0000314"/>
    <property type="project" value="UniProtKB"/>
</dbReference>
<dbReference type="GO" id="GO:0034363">
    <property type="term" value="C:intermediate-density lipoprotein particle"/>
    <property type="evidence" value="ECO:0000314"/>
    <property type="project" value="UniProtKB"/>
</dbReference>
<dbReference type="GO" id="GO:1990777">
    <property type="term" value="C:lipoprotein particle"/>
    <property type="evidence" value="ECO:0000314"/>
    <property type="project" value="ARUK-UCL"/>
</dbReference>
<dbReference type="GO" id="GO:0034362">
    <property type="term" value="C:low-density lipoprotein particle"/>
    <property type="evidence" value="ECO:0000314"/>
    <property type="project" value="UniProtKB"/>
</dbReference>
<dbReference type="GO" id="GO:0042470">
    <property type="term" value="C:melanosome"/>
    <property type="evidence" value="ECO:0000314"/>
    <property type="project" value="UniProtKB"/>
</dbReference>
<dbReference type="GO" id="GO:0016020">
    <property type="term" value="C:membrane"/>
    <property type="evidence" value="ECO:0007005"/>
    <property type="project" value="UniProtKB"/>
</dbReference>
<dbReference type="GO" id="GO:0097487">
    <property type="term" value="C:multivesicular body, internal vesicle"/>
    <property type="evidence" value="ECO:0000314"/>
    <property type="project" value="UniProtKB"/>
</dbReference>
<dbReference type="GO" id="GO:0043025">
    <property type="term" value="C:neuronal cell body"/>
    <property type="evidence" value="ECO:0000303"/>
    <property type="project" value="BHF-UCL"/>
</dbReference>
<dbReference type="GO" id="GO:0005634">
    <property type="term" value="C:nucleus"/>
    <property type="evidence" value="ECO:0007005"/>
    <property type="project" value="UniProtKB"/>
</dbReference>
<dbReference type="GO" id="GO:0005886">
    <property type="term" value="C:plasma membrane"/>
    <property type="evidence" value="ECO:0000304"/>
    <property type="project" value="Reactome"/>
</dbReference>
<dbReference type="GO" id="GO:0043083">
    <property type="term" value="C:synaptic cleft"/>
    <property type="evidence" value="ECO:0000314"/>
    <property type="project" value="SynGO"/>
</dbReference>
<dbReference type="GO" id="GO:0034361">
    <property type="term" value="C:very-low-density lipoprotein particle"/>
    <property type="evidence" value="ECO:0000314"/>
    <property type="project" value="UniProtKB"/>
</dbReference>
<dbReference type="GO" id="GO:0001540">
    <property type="term" value="F:amyloid-beta binding"/>
    <property type="evidence" value="ECO:0000314"/>
    <property type="project" value="UniProtKB"/>
</dbReference>
<dbReference type="GO" id="GO:0016209">
    <property type="term" value="F:antioxidant activity"/>
    <property type="evidence" value="ECO:0000314"/>
    <property type="project" value="BHF-UCL"/>
</dbReference>
<dbReference type="GO" id="GO:0120020">
    <property type="term" value="F:cholesterol transfer activity"/>
    <property type="evidence" value="ECO:0000318"/>
    <property type="project" value="GO_Central"/>
</dbReference>
<dbReference type="GO" id="GO:0019899">
    <property type="term" value="F:enzyme binding"/>
    <property type="evidence" value="ECO:0000353"/>
    <property type="project" value="BHF-UCL"/>
</dbReference>
<dbReference type="GO" id="GO:0043395">
    <property type="term" value="F:heparan sulfate proteoglycan binding"/>
    <property type="evidence" value="ECO:0000314"/>
    <property type="project" value="UniProtKB"/>
</dbReference>
<dbReference type="GO" id="GO:0008201">
    <property type="term" value="F:heparin binding"/>
    <property type="evidence" value="ECO:0000314"/>
    <property type="project" value="UniProtKB"/>
</dbReference>
<dbReference type="GO" id="GO:0042802">
    <property type="term" value="F:identical protein binding"/>
    <property type="evidence" value="ECO:0000314"/>
    <property type="project" value="UniProtKB"/>
</dbReference>
<dbReference type="GO" id="GO:0008289">
    <property type="term" value="F:lipid binding"/>
    <property type="evidence" value="ECO:0000314"/>
    <property type="project" value="UniProtKB"/>
</dbReference>
<dbReference type="GO" id="GO:0005319">
    <property type="term" value="F:lipid transporter activity"/>
    <property type="evidence" value="ECO:0000314"/>
    <property type="project" value="BHF-UCL"/>
</dbReference>
<dbReference type="GO" id="GO:0071813">
    <property type="term" value="F:lipoprotein particle binding"/>
    <property type="evidence" value="ECO:0007669"/>
    <property type="project" value="Ensembl"/>
</dbReference>
<dbReference type="GO" id="GO:0050750">
    <property type="term" value="F:low-density lipoprotein particle receptor binding"/>
    <property type="evidence" value="ECO:0000314"/>
    <property type="project" value="UniProtKB"/>
</dbReference>
<dbReference type="GO" id="GO:0046911">
    <property type="term" value="F:metal chelating activity"/>
    <property type="evidence" value="ECO:0000314"/>
    <property type="project" value="BHF-UCL"/>
</dbReference>
<dbReference type="GO" id="GO:0060228">
    <property type="term" value="F:phosphatidylcholine-sterol O-acyltransferase activator activity"/>
    <property type="evidence" value="ECO:0000314"/>
    <property type="project" value="BHF-UCL"/>
</dbReference>
<dbReference type="GO" id="GO:0005543">
    <property type="term" value="F:phospholipid binding"/>
    <property type="evidence" value="ECO:0000314"/>
    <property type="project" value="BHF-UCL"/>
</dbReference>
<dbReference type="GO" id="GO:0046983">
    <property type="term" value="F:protein dimerization activity"/>
    <property type="evidence" value="ECO:0000353"/>
    <property type="project" value="ARUK-UCL"/>
</dbReference>
<dbReference type="GO" id="GO:0042803">
    <property type="term" value="F:protein homodimerization activity"/>
    <property type="evidence" value="ECO:0000353"/>
    <property type="project" value="ARUK-UCL"/>
</dbReference>
<dbReference type="GO" id="GO:0044877">
    <property type="term" value="F:protein-containing complex binding"/>
    <property type="evidence" value="ECO:0000314"/>
    <property type="project" value="ARUK-UCL"/>
</dbReference>
<dbReference type="GO" id="GO:0048018">
    <property type="term" value="F:receptor ligand activity"/>
    <property type="evidence" value="ECO:0000314"/>
    <property type="project" value="UniProt"/>
</dbReference>
<dbReference type="GO" id="GO:0005102">
    <property type="term" value="F:signaling receptor binding"/>
    <property type="evidence" value="ECO:0000353"/>
    <property type="project" value="ARUK-UCL"/>
</dbReference>
<dbReference type="GO" id="GO:0005198">
    <property type="term" value="F:structural molecule activity"/>
    <property type="evidence" value="ECO:0000304"/>
    <property type="project" value="ARUK-UCL"/>
</dbReference>
<dbReference type="GO" id="GO:0048156">
    <property type="term" value="F:tau protein binding"/>
    <property type="evidence" value="ECO:0000353"/>
    <property type="project" value="BHF-UCL"/>
</dbReference>
<dbReference type="GO" id="GO:0070326">
    <property type="term" value="F:very-low-density lipoprotein particle receptor binding"/>
    <property type="evidence" value="ECO:0000314"/>
    <property type="project" value="BHF-UCL"/>
</dbReference>
<dbReference type="GO" id="GO:0055090">
    <property type="term" value="P:acylglycerol homeostasis"/>
    <property type="evidence" value="ECO:0000318"/>
    <property type="project" value="GO_Central"/>
</dbReference>
<dbReference type="GO" id="GO:0097113">
    <property type="term" value="P:AMPA glutamate receptor clustering"/>
    <property type="evidence" value="ECO:0000314"/>
    <property type="project" value="Alzheimers_University_of_Toronto"/>
</dbReference>
<dbReference type="GO" id="GO:0042982">
    <property type="term" value="P:amyloid precursor protein metabolic process"/>
    <property type="evidence" value="ECO:0000314"/>
    <property type="project" value="UniProtKB"/>
</dbReference>
<dbReference type="GO" id="GO:0048844">
    <property type="term" value="P:artery morphogenesis"/>
    <property type="evidence" value="ECO:0007669"/>
    <property type="project" value="Ensembl"/>
</dbReference>
<dbReference type="GO" id="GO:0071402">
    <property type="term" value="P:cellular response to lipoprotein particle stimulus"/>
    <property type="evidence" value="ECO:0000314"/>
    <property type="project" value="UniProt"/>
</dbReference>
<dbReference type="GO" id="GO:0006707">
    <property type="term" value="P:cholesterol catabolic process"/>
    <property type="evidence" value="ECO:0007669"/>
    <property type="project" value="Ensembl"/>
</dbReference>
<dbReference type="GO" id="GO:0033344">
    <property type="term" value="P:cholesterol efflux"/>
    <property type="evidence" value="ECO:0000314"/>
    <property type="project" value="UniProtKB"/>
</dbReference>
<dbReference type="GO" id="GO:0042632">
    <property type="term" value="P:cholesterol homeostasis"/>
    <property type="evidence" value="ECO:0000314"/>
    <property type="project" value="BHF-UCL"/>
</dbReference>
<dbReference type="GO" id="GO:0008203">
    <property type="term" value="P:cholesterol metabolic process"/>
    <property type="evidence" value="ECO:0000314"/>
    <property type="project" value="BHF-UCL"/>
</dbReference>
<dbReference type="GO" id="GO:0034382">
    <property type="term" value="P:chylomicron remnant clearance"/>
    <property type="evidence" value="ECO:0000314"/>
    <property type="project" value="UniProtKB"/>
</dbReference>
<dbReference type="GO" id="GO:0007010">
    <property type="term" value="P:cytoskeleton organization"/>
    <property type="evidence" value="ECO:0000304"/>
    <property type="project" value="UniProtKB"/>
</dbReference>
<dbReference type="GO" id="GO:0055089">
    <property type="term" value="P:fatty acid homeostasis"/>
    <property type="evidence" value="ECO:0000314"/>
    <property type="project" value="Alzheimers_University_of_Toronto"/>
</dbReference>
<dbReference type="GO" id="GO:0007186">
    <property type="term" value="P:G protein-coupled receptor signaling pathway"/>
    <property type="evidence" value="ECO:0000314"/>
    <property type="project" value="BHF-UCL"/>
</dbReference>
<dbReference type="GO" id="GO:0010467">
    <property type="term" value="P:gene expression"/>
    <property type="evidence" value="ECO:0007669"/>
    <property type="project" value="Ensembl"/>
</dbReference>
<dbReference type="GO" id="GO:0034380">
    <property type="term" value="P:high-density lipoprotein particle assembly"/>
    <property type="evidence" value="ECO:0000314"/>
    <property type="project" value="UniProtKB"/>
</dbReference>
<dbReference type="GO" id="GO:0034384">
    <property type="term" value="P:high-density lipoprotein particle clearance"/>
    <property type="evidence" value="ECO:0000314"/>
    <property type="project" value="BHF-UCL"/>
</dbReference>
<dbReference type="GO" id="GO:0034375">
    <property type="term" value="P:high-density lipoprotein particle remodeling"/>
    <property type="evidence" value="ECO:0000316"/>
    <property type="project" value="BHF-UCL"/>
</dbReference>
<dbReference type="GO" id="GO:0071831">
    <property type="term" value="P:intermediate-density lipoprotein particle clearance"/>
    <property type="evidence" value="ECO:0000314"/>
    <property type="project" value="UniProtKB"/>
</dbReference>
<dbReference type="GO" id="GO:0006874">
    <property type="term" value="P:intracellular calcium ion homeostasis"/>
    <property type="evidence" value="ECO:0007669"/>
    <property type="project" value="Ensembl"/>
</dbReference>
<dbReference type="GO" id="GO:0046907">
    <property type="term" value="P:intracellular transport"/>
    <property type="evidence" value="ECO:0000304"/>
    <property type="project" value="UniProtKB"/>
</dbReference>
<dbReference type="GO" id="GO:0010877">
    <property type="term" value="P:lipid transport involved in lipid storage"/>
    <property type="evidence" value="ECO:0000250"/>
    <property type="project" value="BHF-UCL"/>
</dbReference>
<dbReference type="GO" id="GO:0042158">
    <property type="term" value="P:lipoprotein biosynthetic process"/>
    <property type="evidence" value="ECO:0000314"/>
    <property type="project" value="UniProtKB"/>
</dbReference>
<dbReference type="GO" id="GO:0042159">
    <property type="term" value="P:lipoprotein catabolic process"/>
    <property type="evidence" value="ECO:0007669"/>
    <property type="project" value="Ensembl"/>
</dbReference>
<dbReference type="GO" id="GO:0035641">
    <property type="term" value="P:locomotory exploration behavior"/>
    <property type="evidence" value="ECO:0000315"/>
    <property type="project" value="ARUK-UCL"/>
</dbReference>
<dbReference type="GO" id="GO:0015909">
    <property type="term" value="P:long-chain fatty acid transport"/>
    <property type="evidence" value="ECO:0000314"/>
    <property type="project" value="Alzheimers_University_of_Toronto"/>
</dbReference>
<dbReference type="GO" id="GO:0007616">
    <property type="term" value="P:long-term memory"/>
    <property type="evidence" value="ECO:0000316"/>
    <property type="project" value="ARUK-UCL"/>
</dbReference>
<dbReference type="GO" id="GO:0034374">
    <property type="term" value="P:low-density lipoprotein particle remodeling"/>
    <property type="evidence" value="ECO:0007669"/>
    <property type="project" value="Ensembl"/>
</dbReference>
<dbReference type="GO" id="GO:0051651">
    <property type="term" value="P:maintenance of location in cell"/>
    <property type="evidence" value="ECO:0007669"/>
    <property type="project" value="Ensembl"/>
</dbReference>
<dbReference type="GO" id="GO:0032438">
    <property type="term" value="P:melanosome organization"/>
    <property type="evidence" value="ECO:0000315"/>
    <property type="project" value="UniProtKB"/>
</dbReference>
<dbReference type="GO" id="GO:1905907">
    <property type="term" value="P:negative regulation of amyloid fibril formation"/>
    <property type="evidence" value="ECO:0000250"/>
    <property type="project" value="UniProtKB"/>
</dbReference>
<dbReference type="GO" id="GO:1902430">
    <property type="term" value="P:negative regulation of amyloid-beta formation"/>
    <property type="evidence" value="ECO:0000314"/>
    <property type="project" value="Alzheimers_University_of_Toronto"/>
</dbReference>
<dbReference type="GO" id="GO:0030195">
    <property type="term" value="P:negative regulation of blood coagulation"/>
    <property type="evidence" value="ECO:0000314"/>
    <property type="project" value="BHF-UCL"/>
</dbReference>
<dbReference type="GO" id="GO:0043537">
    <property type="term" value="P:negative regulation of blood vessel endothelial cell migration"/>
    <property type="evidence" value="ECO:0000314"/>
    <property type="project" value="BHF-UCL"/>
</dbReference>
<dbReference type="GO" id="GO:0090090">
    <property type="term" value="P:negative regulation of canonical Wnt signaling pathway"/>
    <property type="evidence" value="ECO:0000314"/>
    <property type="project" value="ARUK-UCL"/>
</dbReference>
<dbReference type="GO" id="GO:0045541">
    <property type="term" value="P:negative regulation of cholesterol biosynthetic process"/>
    <property type="evidence" value="ECO:0000314"/>
    <property type="project" value="BHF-UCL"/>
</dbReference>
<dbReference type="GO" id="GO:0010596">
    <property type="term" value="P:negative regulation of endothelial cell migration"/>
    <property type="evidence" value="ECO:0000315"/>
    <property type="project" value="ARUK-UCL"/>
</dbReference>
<dbReference type="GO" id="GO:0001937">
    <property type="term" value="P:negative regulation of endothelial cell proliferation"/>
    <property type="evidence" value="ECO:0000314"/>
    <property type="project" value="BHF-UCL"/>
</dbReference>
<dbReference type="GO" id="GO:0010629">
    <property type="term" value="P:negative regulation of gene expression"/>
    <property type="evidence" value="ECO:0000250"/>
    <property type="project" value="ARUK-UCL"/>
</dbReference>
<dbReference type="GO" id="GO:0050728">
    <property type="term" value="P:negative regulation of inflammatory response"/>
    <property type="evidence" value="ECO:0000314"/>
    <property type="project" value="BHF-UCL"/>
</dbReference>
<dbReference type="GO" id="GO:1900272">
    <property type="term" value="P:negative regulation of long-term synaptic potentiation"/>
    <property type="evidence" value="ECO:0000314"/>
    <property type="project" value="ARUK-UCL"/>
</dbReference>
<dbReference type="GO" id="GO:0043407">
    <property type="term" value="P:negative regulation of MAP kinase activity"/>
    <property type="evidence" value="ECO:0000314"/>
    <property type="project" value="BHF-UCL"/>
</dbReference>
<dbReference type="GO" id="GO:0010977">
    <property type="term" value="P:negative regulation of neuron projection development"/>
    <property type="evidence" value="ECO:0000314"/>
    <property type="project" value="ARUK-UCL"/>
</dbReference>
<dbReference type="GO" id="GO:0010544">
    <property type="term" value="P:negative regulation of platelet activation"/>
    <property type="evidence" value="ECO:0000314"/>
    <property type="project" value="BHF-UCL"/>
</dbReference>
<dbReference type="GO" id="GO:0051248">
    <property type="term" value="P:negative regulation of protein metabolic process"/>
    <property type="evidence" value="ECO:0000316"/>
    <property type="project" value="ARUK-UCL"/>
</dbReference>
<dbReference type="GO" id="GO:0050709">
    <property type="term" value="P:negative regulation of protein secretion"/>
    <property type="evidence" value="ECO:0000315"/>
    <property type="project" value="UniProtKB"/>
</dbReference>
<dbReference type="GO" id="GO:0048662">
    <property type="term" value="P:negative regulation of smooth muscle cell proliferation"/>
    <property type="evidence" value="ECO:0000250"/>
    <property type="project" value="BHF-UCL"/>
</dbReference>
<dbReference type="GO" id="GO:0090209">
    <property type="term" value="P:negative regulation of triglyceride metabolic process"/>
    <property type="evidence" value="ECO:0007669"/>
    <property type="project" value="Ensembl"/>
</dbReference>
<dbReference type="GO" id="GO:0031175">
    <property type="term" value="P:neuron projection development"/>
    <property type="evidence" value="ECO:0000314"/>
    <property type="project" value="UniProtKB"/>
</dbReference>
<dbReference type="GO" id="GO:0038060">
    <property type="term" value="P:nitric oxide-cGMP-mediated signaling"/>
    <property type="evidence" value="ECO:0000314"/>
    <property type="project" value="BHF-UCL"/>
</dbReference>
<dbReference type="GO" id="GO:0097114">
    <property type="term" value="P:NMDA glutamate receptor clustering"/>
    <property type="evidence" value="ECO:0000314"/>
    <property type="project" value="Alzheimers_University_of_Toronto"/>
</dbReference>
<dbReference type="GO" id="GO:0033700">
    <property type="term" value="P:phospholipid efflux"/>
    <property type="evidence" value="ECO:0000314"/>
    <property type="project" value="BHF-UCL"/>
</dbReference>
<dbReference type="GO" id="GO:0044794">
    <property type="term" value="P:positive regulation by host of viral process"/>
    <property type="evidence" value="ECO:0000315"/>
    <property type="project" value="AgBase"/>
</dbReference>
<dbReference type="GO" id="GO:1905908">
    <property type="term" value="P:positive regulation of amyloid fibril formation"/>
    <property type="evidence" value="ECO:0000304"/>
    <property type="project" value="ARUK-UCL"/>
</dbReference>
<dbReference type="GO" id="GO:1900223">
    <property type="term" value="P:positive regulation of amyloid-beta clearance"/>
    <property type="evidence" value="ECO:0000250"/>
    <property type="project" value="UniProtKB"/>
</dbReference>
<dbReference type="GO" id="GO:0010875">
    <property type="term" value="P:positive regulation of cholesterol efflux"/>
    <property type="evidence" value="ECO:0000314"/>
    <property type="project" value="Alzheimers_University_of_Toronto"/>
</dbReference>
<dbReference type="GO" id="GO:0090205">
    <property type="term" value="P:positive regulation of cholesterol metabolic process"/>
    <property type="evidence" value="ECO:0000314"/>
    <property type="project" value="BHF-UCL"/>
</dbReference>
<dbReference type="GO" id="GO:0060999">
    <property type="term" value="P:positive regulation of dendritic spine development"/>
    <property type="evidence" value="ECO:0000314"/>
    <property type="project" value="Alzheimers_University_of_Toronto"/>
</dbReference>
<dbReference type="GO" id="GO:1902952">
    <property type="term" value="P:positive regulation of dendritic spine maintenance"/>
    <property type="evidence" value="ECO:0000314"/>
    <property type="project" value="Alzheimers_University_of_Toronto"/>
</dbReference>
<dbReference type="GO" id="GO:0045893">
    <property type="term" value="P:positive regulation of DNA-templated transcription"/>
    <property type="evidence" value="ECO:0000315"/>
    <property type="project" value="UniProtKB"/>
</dbReference>
<dbReference type="GO" id="GO:0045807">
    <property type="term" value="P:positive regulation of endocytosis"/>
    <property type="evidence" value="ECO:0000314"/>
    <property type="project" value="ARUK-UCL"/>
</dbReference>
<dbReference type="GO" id="GO:0070374">
    <property type="term" value="P:positive regulation of ERK1 and ERK2 cascade"/>
    <property type="evidence" value="ECO:0000315"/>
    <property type="project" value="UniProtKB"/>
</dbReference>
<dbReference type="GO" id="GO:0046889">
    <property type="term" value="P:positive regulation of lipid biosynthetic process"/>
    <property type="evidence" value="ECO:0000314"/>
    <property type="project" value="Alzheimers_University_of_Toronto"/>
</dbReference>
<dbReference type="GO" id="GO:1903002">
    <property type="term" value="P:positive regulation of lipid transport across blood-brain barrier"/>
    <property type="evidence" value="ECO:0000314"/>
    <property type="project" value="Alzheimers_University_of_Toronto"/>
</dbReference>
<dbReference type="GO" id="GO:0140077">
    <property type="term" value="P:positive regulation of lipoprotein transport"/>
    <property type="evidence" value="ECO:0000314"/>
    <property type="project" value="ARUK-UCL"/>
</dbReference>
<dbReference type="GO" id="GO:0032805">
    <property type="term" value="P:positive regulation of low-density lipoprotein particle receptor catabolic process"/>
    <property type="evidence" value="ECO:0000314"/>
    <property type="project" value="BHF-UCL"/>
</dbReference>
<dbReference type="GO" id="GO:0051044">
    <property type="term" value="P:positive regulation of membrane protein ectodomain proteolysis"/>
    <property type="evidence" value="ECO:0000314"/>
    <property type="project" value="BHF-UCL"/>
</dbReference>
<dbReference type="GO" id="GO:0010976">
    <property type="term" value="P:positive regulation of neuron projection development"/>
    <property type="evidence" value="ECO:0000314"/>
    <property type="project" value="ARUK-UCL"/>
</dbReference>
<dbReference type="GO" id="GO:0045429">
    <property type="term" value="P:positive regulation of nitric oxide biosynthetic process"/>
    <property type="evidence" value="ECO:0000314"/>
    <property type="project" value="BHF-UCL"/>
</dbReference>
<dbReference type="GO" id="GO:1902995">
    <property type="term" value="P:positive regulation of phospholipid efflux"/>
    <property type="evidence" value="ECO:0000314"/>
    <property type="project" value="Alzheimers_University_of_Toronto"/>
</dbReference>
<dbReference type="GO" id="GO:0017038">
    <property type="term" value="P:protein import"/>
    <property type="evidence" value="ECO:0000314"/>
    <property type="project" value="Alzheimers_University_of_Toronto"/>
</dbReference>
<dbReference type="GO" id="GO:0006898">
    <property type="term" value="P:receptor-mediated endocytosis"/>
    <property type="evidence" value="ECO:0000314"/>
    <property type="project" value="BHF-UCL"/>
</dbReference>
<dbReference type="GO" id="GO:1905906">
    <property type="term" value="P:regulation of amyloid fibril formation"/>
    <property type="evidence" value="ECO:0000314"/>
    <property type="project" value="ARUK-UCL"/>
</dbReference>
<dbReference type="GO" id="GO:1902991">
    <property type="term" value="P:regulation of amyloid precursor protein catabolic process"/>
    <property type="evidence" value="ECO:0000314"/>
    <property type="project" value="UniProtKB"/>
</dbReference>
<dbReference type="GO" id="GO:1900221">
    <property type="term" value="P:regulation of amyloid-beta clearance"/>
    <property type="evidence" value="ECO:0000314"/>
    <property type="project" value="Alzheimers_University_of_Toronto"/>
</dbReference>
<dbReference type="GO" id="GO:0042981">
    <property type="term" value="P:regulation of apoptotic process"/>
    <property type="evidence" value="ECO:0007669"/>
    <property type="project" value="Ensembl"/>
</dbReference>
<dbReference type="GO" id="GO:0030516">
    <property type="term" value="P:regulation of axon extension"/>
    <property type="evidence" value="ECO:0000304"/>
    <property type="project" value="UniProtKB"/>
</dbReference>
<dbReference type="GO" id="GO:2000822">
    <property type="term" value="P:regulation of behavioral fear response"/>
    <property type="evidence" value="ECO:0000315"/>
    <property type="project" value="ARUK-UCL"/>
</dbReference>
<dbReference type="GO" id="GO:0032489">
    <property type="term" value="P:regulation of Cdc42 protein signal transduction"/>
    <property type="evidence" value="ECO:0000314"/>
    <property type="project" value="BHF-UCL"/>
</dbReference>
<dbReference type="GO" id="GO:1905890">
    <property type="term" value="P:regulation of cellular response to very-low-density lipoprotein particle stimulus"/>
    <property type="evidence" value="ECO:0000314"/>
    <property type="project" value="ARUK-UCL"/>
</dbReference>
<dbReference type="GO" id="GO:0090181">
    <property type="term" value="P:regulation of cholesterol metabolic process"/>
    <property type="evidence" value="ECO:0000316"/>
    <property type="project" value="ARUK-UCL"/>
</dbReference>
<dbReference type="GO" id="GO:0045088">
    <property type="term" value="P:regulation of innate immune response"/>
    <property type="evidence" value="ECO:0007669"/>
    <property type="project" value="Ensembl"/>
</dbReference>
<dbReference type="GO" id="GO:0048168">
    <property type="term" value="P:regulation of neuronal synaptic plasticity"/>
    <property type="evidence" value="ECO:0000304"/>
    <property type="project" value="UniProtKB"/>
</dbReference>
<dbReference type="GO" id="GO:0061136">
    <property type="term" value="P:regulation of proteasomal protein catabolic process"/>
    <property type="evidence" value="ECO:0000315"/>
    <property type="project" value="UniProtKB"/>
</dbReference>
<dbReference type="GO" id="GO:0051246">
    <property type="term" value="P:regulation of protein metabolic process"/>
    <property type="evidence" value="ECO:0000316"/>
    <property type="project" value="ARUK-UCL"/>
</dbReference>
<dbReference type="GO" id="GO:0043254">
    <property type="term" value="P:regulation of protein-containing complex assembly"/>
    <property type="evidence" value="ECO:0000314"/>
    <property type="project" value="ARUK-UCL"/>
</dbReference>
<dbReference type="GO" id="GO:0061771">
    <property type="term" value="P:response to caloric restriction"/>
    <property type="evidence" value="ECO:0000316"/>
    <property type="project" value="ARUK-UCL"/>
</dbReference>
<dbReference type="GO" id="GO:0002021">
    <property type="term" value="P:response to dietary excess"/>
    <property type="evidence" value="ECO:0007669"/>
    <property type="project" value="Ensembl"/>
</dbReference>
<dbReference type="GO" id="GO:0000302">
    <property type="term" value="P:response to reactive oxygen species"/>
    <property type="evidence" value="ECO:0000303"/>
    <property type="project" value="UniProtKB"/>
</dbReference>
<dbReference type="GO" id="GO:0043691">
    <property type="term" value="P:reverse cholesterol transport"/>
    <property type="evidence" value="ECO:0000314"/>
    <property type="project" value="BHF-UCL"/>
</dbReference>
<dbReference type="GO" id="GO:0007271">
    <property type="term" value="P:synaptic transmission, cholinergic"/>
    <property type="evidence" value="ECO:0000304"/>
    <property type="project" value="UniProtKB"/>
</dbReference>
<dbReference type="GO" id="GO:0070328">
    <property type="term" value="P:triglyceride homeostasis"/>
    <property type="evidence" value="ECO:0000250"/>
    <property type="project" value="BHF-UCL"/>
</dbReference>
<dbReference type="GO" id="GO:0006641">
    <property type="term" value="P:triglyceride metabolic process"/>
    <property type="evidence" value="ECO:0000314"/>
    <property type="project" value="BHF-UCL"/>
</dbReference>
<dbReference type="GO" id="GO:0071830">
    <property type="term" value="P:triglyceride-rich lipoprotein particle clearance"/>
    <property type="evidence" value="ECO:0000315"/>
    <property type="project" value="UniProtKB"/>
</dbReference>
<dbReference type="GO" id="GO:0042311">
    <property type="term" value="P:vasodilation"/>
    <property type="evidence" value="ECO:0007669"/>
    <property type="project" value="Ensembl"/>
</dbReference>
<dbReference type="GO" id="GO:0034447">
    <property type="term" value="P:very-low-density lipoprotein particle clearance"/>
    <property type="evidence" value="ECO:0000314"/>
    <property type="project" value="UniProtKB"/>
</dbReference>
<dbReference type="GO" id="GO:0034372">
    <property type="term" value="P:very-low-density lipoprotein particle remodeling"/>
    <property type="evidence" value="ECO:0000314"/>
    <property type="project" value="BHF-UCL"/>
</dbReference>
<dbReference type="GO" id="GO:0019068">
    <property type="term" value="P:virion assembly"/>
    <property type="evidence" value="ECO:0000315"/>
    <property type="project" value="AgBase"/>
</dbReference>
<dbReference type="FunFam" id="1.20.120.20:FF:000002">
    <property type="entry name" value="Apolipoprotein E"/>
    <property type="match status" value="1"/>
</dbReference>
<dbReference type="FunFam" id="1.20.120.20:FF:000003">
    <property type="entry name" value="Apolipoprotein E"/>
    <property type="match status" value="1"/>
</dbReference>
<dbReference type="Gene3D" id="1.20.120.20">
    <property type="entry name" value="Apolipoprotein"/>
    <property type="match status" value="2"/>
</dbReference>
<dbReference type="InterPro" id="IPR000074">
    <property type="entry name" value="ApoA_E"/>
</dbReference>
<dbReference type="InterPro" id="IPR050163">
    <property type="entry name" value="Apolipoprotein_A1/A4/E"/>
</dbReference>
<dbReference type="PANTHER" id="PTHR18976">
    <property type="entry name" value="APOLIPOPROTEIN"/>
    <property type="match status" value="1"/>
</dbReference>
<dbReference type="PANTHER" id="PTHR18976:SF2">
    <property type="entry name" value="APOLIPOPROTEIN E"/>
    <property type="match status" value="1"/>
</dbReference>
<dbReference type="Pfam" id="PF01442">
    <property type="entry name" value="Apolipoprotein"/>
    <property type="match status" value="1"/>
</dbReference>
<dbReference type="SUPFAM" id="SSF58113">
    <property type="entry name" value="Apolipoprotein A-I"/>
    <property type="match status" value="1"/>
</dbReference>